<accession>P02679</accession>
<accession>A8K057</accession>
<accession>P04469</accession>
<accession>P04470</accession>
<accession>Q53Y18</accession>
<accession>Q96A14</accession>
<accession>Q96KJ3</accession>
<accession>Q9UC62</accession>
<accession>Q9UC63</accession>
<accession>Q9UCF3</accession>
<protein>
    <recommendedName>
        <fullName>Fibrinogen gamma chain</fullName>
    </recommendedName>
</protein>
<gene>
    <name type="primary">FGG</name>
    <name type="ORF">PRO2061</name>
</gene>
<organism>
    <name type="scientific">Homo sapiens</name>
    <name type="common">Human</name>
    <dbReference type="NCBI Taxonomy" id="9606"/>
    <lineage>
        <taxon>Eukaryota</taxon>
        <taxon>Metazoa</taxon>
        <taxon>Chordata</taxon>
        <taxon>Craniata</taxon>
        <taxon>Vertebrata</taxon>
        <taxon>Euteleostomi</taxon>
        <taxon>Mammalia</taxon>
        <taxon>Eutheria</taxon>
        <taxon>Euarchontoglires</taxon>
        <taxon>Primates</taxon>
        <taxon>Haplorrhini</taxon>
        <taxon>Catarrhini</taxon>
        <taxon>Hominidae</taxon>
        <taxon>Homo</taxon>
    </lineage>
</organism>
<feature type="signal peptide" evidence="42 48">
    <location>
        <begin position="1"/>
        <end position="26"/>
    </location>
</feature>
<feature type="chain" id="PRO_0000009099" description="Fibrinogen gamma chain">
    <location>
        <begin position="27"/>
        <end position="453"/>
    </location>
</feature>
<feature type="domain" description="Fibrinogen C-terminal" evidence="2">
    <location>
        <begin position="170"/>
        <end position="416"/>
    </location>
</feature>
<feature type="region of interest" description="Gamma-chain polymerization, binding amino end of another fibrin alpha chain">
    <location>
        <begin position="400"/>
        <end position="422"/>
    </location>
</feature>
<feature type="region of interest" description="Platelet aggregation and Staphylococcus clumping">
    <location>
        <begin position="423"/>
        <end position="437"/>
    </location>
</feature>
<feature type="region of interest" description="Disordered" evidence="3">
    <location>
        <begin position="424"/>
        <end position="453"/>
    </location>
</feature>
<feature type="compositionally biased region" description="Acidic residues" evidence="3">
    <location>
        <begin position="442"/>
        <end position="453"/>
    </location>
</feature>
<feature type="binding site" evidence="4 20 43 44 45 46 56">
    <location>
        <position position="344"/>
    </location>
    <ligand>
        <name>Ca(2+)</name>
        <dbReference type="ChEBI" id="CHEBI:29108"/>
    </ligand>
</feature>
<feature type="binding site" evidence="4 20 43 44 45 46 56">
    <location>
        <position position="346"/>
    </location>
    <ligand>
        <name>Ca(2+)</name>
        <dbReference type="ChEBI" id="CHEBI:29108"/>
    </ligand>
</feature>
<feature type="binding site" evidence="4 20 43 44 45 46 56">
    <location>
        <position position="348"/>
    </location>
    <ligand>
        <name>Ca(2+)</name>
        <dbReference type="ChEBI" id="CHEBI:29108"/>
    </ligand>
</feature>
<feature type="binding site" evidence="4 20 43 44 45 46 56">
    <location>
        <position position="350"/>
    </location>
    <ligand>
        <name>Ca(2+)</name>
        <dbReference type="ChEBI" id="CHEBI:29108"/>
    </ligand>
</feature>
<feature type="site" description="Cleavage; by plasmin; to break down fibrin clots">
    <location>
        <begin position="84"/>
        <end position="85"/>
    </location>
</feature>
<feature type="site" description="Cleavage; by plasmin; to break down fibrin clots">
    <location>
        <begin position="88"/>
        <end position="89"/>
    </location>
</feature>
<feature type="site" description="Cleavage; by hementin; to prevent blood coagulation">
    <location>
        <begin position="102"/>
        <end position="103"/>
    </location>
</feature>
<feature type="modified residue" description="Phosphoserine; by FAM20C" evidence="27">
    <location>
        <position position="68"/>
    </location>
</feature>
<feature type="modified residue" description="Sulfotyrosine" evidence="6">
    <location>
        <position position="444"/>
    </location>
</feature>
<feature type="modified residue" description="Sulfotyrosine" evidence="6">
    <location>
        <position position="448"/>
    </location>
</feature>
<feature type="glycosylation site" description="N-linked (GlcNAc...) (complex) asparagine" evidence="11 13 14 16 18 19">
    <location>
        <position position="78"/>
    </location>
</feature>
<feature type="glycosylation site" description="N-linked (GlcNAc...) asparagine; in variant Asahi">
    <location>
        <position position="334"/>
    </location>
</feature>
<feature type="disulfide bond" description="Interchain (with C-35)" evidence="20 57">
    <location>
        <position position="34"/>
    </location>
</feature>
<feature type="disulfide bond" description="Interchain (with C-34)" evidence="20 57">
    <location>
        <position position="35"/>
    </location>
</feature>
<feature type="disulfide bond" description="Interchain (with C-110 in beta chain)" evidence="55">
    <location>
        <position position="45"/>
    </location>
</feature>
<feature type="disulfide bond" description="Interchain (with C-64 in alpha chain)" evidence="55">
    <location>
        <position position="49"/>
    </location>
</feature>
<feature type="disulfide bond" description="Interchain (with C-227 in beta chain)" evidence="55">
    <location>
        <position position="161"/>
    </location>
</feature>
<feature type="disulfide bond" description="Interchain (with C-180 in alpha chain)" evidence="55">
    <location>
        <position position="165"/>
    </location>
</feature>
<feature type="disulfide bond" evidence="4 20 43 44 45 46 56">
    <location>
        <begin position="179"/>
        <end position="208"/>
    </location>
</feature>
<feature type="disulfide bond" evidence="4 20 43 44 45 46 56">
    <location>
        <begin position="352"/>
        <end position="365"/>
    </location>
</feature>
<feature type="cross-link" description="Isoglutamyl lysine isopeptide (Gln-Lys) (interchain with K-432)">
    <location>
        <position position="424"/>
    </location>
</feature>
<feature type="cross-link" description="Isoglutamyl lysine isopeptide (Lys-Gln) (interchain with Q-424)">
    <location>
        <position position="432"/>
    </location>
</feature>
<feature type="splice variant" id="VSP_001537" description="In isoform Gamma-A." evidence="49 50 51 52 53">
    <original>VRPEHPAETEYDSLYPEDDL</original>
    <variation>AGDV</variation>
    <location>
        <begin position="434"/>
        <end position="453"/>
    </location>
</feature>
<feature type="sequence variant" id="VAR_049066" description="In dbSNP:rs11551835.">
    <original>E</original>
    <variation>G</variation>
    <location>
        <position position="77"/>
    </location>
</feature>
<feature type="sequence variant" id="VAR_033930" description="In dbSNP:rs2066870." evidence="47">
    <original>Y</original>
    <variation>H</variation>
    <location>
        <position position="140"/>
    </location>
</feature>
<feature type="sequence variant" id="VAR_014170" description="In Milano-12; dbSNP:rs6063." evidence="5 7 47">
    <original>G</original>
    <variation>R</variation>
    <location>
        <position position="191"/>
    </location>
</feature>
<feature type="sequence variant" id="VAR_002409" description="In Tochigi/Osaka-2/Milano-5/Villajoyosa; dbSNP:rs121913087." evidence="9 30 33 37 38">
    <original>R</original>
    <variation>C</variation>
    <location>
        <position position="301"/>
    </location>
</feature>
<feature type="sequence variant" id="VAR_002410" description="In DYSFIBRIN; fibrinogen Bergamo-2/Essen/Haifa/Osaka-3/Perugia/Saga/Barcelona-3/Barcelona-4; dbSNP:rs121913088." evidence="10 32 34 37">
    <original>R</original>
    <variation>H</variation>
    <location>
        <position position="301"/>
    </location>
</feature>
<feature type="sequence variant" id="VAR_072726" description="In CAFBN; hypofibrinogenemia; heterozygous; no effect on fibrinogen complex assembly; impaired fibrinogen complex secretion." evidence="26">
    <original>T</original>
    <variation>P</variation>
    <location>
        <position position="303"/>
    </location>
</feature>
<feature type="sequence variant" id="VAR_002411" description="In DYSFIBRIN; fibrinogen Baltimore-1; impaired polymerization; dbSNP:rs121913089." evidence="23">
    <original>G</original>
    <variation>V</variation>
    <location>
        <position position="318"/>
    </location>
</feature>
<feature type="sequence variant" id="VAR_072727" description="In CAFBN; hypofibrinogenemia; heterozygous; no effect on fibrinogen complex assembly; no effect on fibrinogen complex secretion." evidence="26">
    <original>D</original>
    <variation>H</variation>
    <location>
        <position position="327"/>
    </location>
</feature>
<feature type="sequence variant" id="VAR_002413" description="In Baltimore-3; impaired polymerization; dbSNP:rs121913090." evidence="24">
    <original>N</original>
    <variation>I</variation>
    <location>
        <position position="334"/>
    </location>
</feature>
<feature type="sequence variant" id="VAR_002412" description="In Kyoto-1; causes accelerated cleavage by plasmin; dbSNP:rs1578808538." evidence="9 31">
    <original>N</original>
    <variation>K</variation>
    <location>
        <position position="334"/>
    </location>
</feature>
<feature type="sequence variant" id="VAR_015853" description="In Hillsborough; prolonged thrombin clotting time." evidence="8">
    <original>G</original>
    <variation>D</variation>
    <location>
        <position position="335"/>
    </location>
</feature>
<feature type="sequence variant" id="VAR_002414" description="In Asahi; impaired polymerization; dbSNP:rs121913091." evidence="9 25">
    <original>M</original>
    <variation>T</variation>
    <location>
        <position position="336"/>
    </location>
</feature>
<feature type="sequence variant" id="VAR_002415" description="In Vlissingen; defective calcium binding and impaired polymerization." evidence="21">
    <location>
        <begin position="345"/>
        <end position="346"/>
    </location>
</feature>
<feature type="sequence variant" id="VAR_072728" description="In CAFBN; hypofibrinogenemia; heterozygous; no effect on fibrinogen complex assembly; decreased fibrinogen complex secretion." evidence="26">
    <original>N</original>
    <variation>D</variation>
    <location>
        <position position="345"/>
    </location>
</feature>
<feature type="sequence variant" id="VAR_002416" description="In Nagoya-1; impaired polymerization; dbSNP:rs121913092." evidence="28">
    <original>Q</original>
    <variation>R</variation>
    <location>
        <position position="355"/>
    </location>
</feature>
<feature type="sequence variant" id="VAR_002418" description="In DYSFIBRIN; fibrinogen Milano-1; impaired polymerization; dbSNP:rs121913094." evidence="35">
    <original>D</original>
    <variation>V</variation>
    <location>
        <position position="356"/>
    </location>
</feature>
<feature type="sequence variant" id="VAR_002417" description="In Kyoto-3; impaired polymerization; dbSNP:rs121913093." evidence="9 29">
    <original>D</original>
    <variation>Y</variation>
    <location>
        <position position="356"/>
    </location>
</feature>
<feature type="sequence variant" id="VAR_002419" description="In Bern-1; impaired polymerization." evidence="40">
    <original>N</original>
    <variation>K</variation>
    <location>
        <position position="363"/>
    </location>
</feature>
<feature type="sequence variant" id="VAR_002420" description="In Paris-1; impaired polymerization." evidence="41">
    <original>G</original>
    <variation>VMCGEALPMLKDPCYS</variation>
    <location>
        <position position="377"/>
    </location>
</feature>
<feature type="sequence variant" id="VAR_002421" description="In Milano-7; impaired polymerization." evidence="39">
    <original>S</original>
    <variation>C</variation>
    <location>
        <position position="384"/>
    </location>
</feature>
<feature type="sequence variant" id="VAR_002422" description="In Osaka-5; dbSNP:rs75848804." evidence="15">
    <original>R</original>
    <variation>G</variation>
    <location>
        <position position="401"/>
    </location>
</feature>
<feature type="sequence variant" id="VAR_072729" description="In CAFBN; hypofibrinogenemia; heterozygous; dbSNP:rs75848804." evidence="26">
    <original>R</original>
    <variation>W</variation>
    <location>
        <position position="401"/>
    </location>
</feature>
<feature type="sequence variant" id="VAR_072621" description="In DYSFIBRIN; fibrinogen Philadelphia; dbSNP:rs587777720." evidence="12">
    <original>S</original>
    <variation>P</variation>
    <location>
        <position position="404"/>
    </location>
</feature>
<feature type="sequence variant" id="VAR_014171" description="In dbSNP:rs6061." evidence="5">
    <original>M</original>
    <variation>V</variation>
    <location>
        <position position="410"/>
    </location>
</feature>
<feature type="sequence conflict" description="In Ref. 2; AAB59530/AAB59531." evidence="54" ref="2">
    <original>K</original>
    <variation>I</variation>
    <location>
        <position position="114"/>
    </location>
</feature>
<feature type="sequence conflict" description="In Ref. 15; AA sequence." evidence="54" ref="15">
    <original>R</original>
    <variation>Y</variation>
    <location>
        <position position="435"/>
    </location>
</feature>
<feature type="sequence conflict" description="In Ref. 15; AA sequence." evidence="54" ref="15">
    <original>Y</original>
    <variation>R</variation>
    <location>
        <position position="448"/>
    </location>
</feature>
<feature type="helix" evidence="69">
    <location>
        <begin position="31"/>
        <end position="33"/>
    </location>
</feature>
<feature type="strand" evidence="69">
    <location>
        <begin position="34"/>
        <end position="36"/>
    </location>
</feature>
<feature type="strand" evidence="69">
    <location>
        <begin position="44"/>
        <end position="46"/>
    </location>
</feature>
<feature type="helix" evidence="69">
    <location>
        <begin position="49"/>
        <end position="94"/>
    </location>
</feature>
<feature type="turn" evidence="69">
    <location>
        <begin position="96"/>
        <end position="98"/>
    </location>
</feature>
<feature type="turn" evidence="60">
    <location>
        <begin position="115"/>
        <end position="118"/>
    </location>
</feature>
<feature type="turn" evidence="61">
    <location>
        <begin position="119"/>
        <end position="122"/>
    </location>
</feature>
<feature type="turn" evidence="62">
    <location>
        <begin position="124"/>
        <end position="128"/>
    </location>
</feature>
<feature type="helix" evidence="62">
    <location>
        <begin position="129"/>
        <end position="160"/>
    </location>
</feature>
<feature type="strand" evidence="66">
    <location>
        <begin position="161"/>
        <end position="163"/>
    </location>
</feature>
<feature type="strand" evidence="62">
    <location>
        <begin position="166"/>
        <end position="168"/>
    </location>
</feature>
<feature type="strand" evidence="64">
    <location>
        <begin position="171"/>
        <end position="178"/>
    </location>
</feature>
<feature type="helix" evidence="64">
    <location>
        <begin position="179"/>
        <end position="184"/>
    </location>
</feature>
<feature type="strand" evidence="64">
    <location>
        <begin position="191"/>
        <end position="195"/>
    </location>
</feature>
<feature type="turn" evidence="59">
    <location>
        <begin position="198"/>
        <end position="200"/>
    </location>
</feature>
<feature type="strand" evidence="64">
    <location>
        <begin position="204"/>
        <end position="210"/>
    </location>
</feature>
<feature type="strand" evidence="67">
    <location>
        <begin position="212"/>
        <end position="214"/>
    </location>
</feature>
<feature type="strand" evidence="64">
    <location>
        <begin position="216"/>
        <end position="226"/>
    </location>
</feature>
<feature type="helix" evidence="64">
    <location>
        <begin position="234"/>
        <end position="239"/>
    </location>
</feature>
<feature type="strand" evidence="62">
    <location>
        <begin position="241"/>
        <end position="244"/>
    </location>
</feature>
<feature type="strand" evidence="60">
    <location>
        <begin position="246"/>
        <end position="248"/>
    </location>
</feature>
<feature type="strand" evidence="63">
    <location>
        <begin position="252"/>
        <end position="254"/>
    </location>
</feature>
<feature type="helix" evidence="64">
    <location>
        <begin position="256"/>
        <end position="263"/>
    </location>
</feature>
<feature type="helix" evidence="64">
    <location>
        <begin position="265"/>
        <end position="267"/>
    </location>
</feature>
<feature type="strand" evidence="64">
    <location>
        <begin position="270"/>
        <end position="277"/>
    </location>
</feature>
<feature type="strand" evidence="68">
    <location>
        <begin position="279"/>
        <end position="281"/>
    </location>
</feature>
<feature type="strand" evidence="64">
    <location>
        <begin position="283"/>
        <end position="290"/>
    </location>
</feature>
<feature type="helix" evidence="64">
    <location>
        <begin position="296"/>
        <end position="298"/>
    </location>
</feature>
<feature type="strand" evidence="70">
    <location>
        <begin position="301"/>
        <end position="303"/>
    </location>
</feature>
<feature type="strand" evidence="64">
    <location>
        <begin position="305"/>
        <end position="309"/>
    </location>
</feature>
<feature type="helix" evidence="64">
    <location>
        <begin position="315"/>
        <end position="317"/>
    </location>
</feature>
<feature type="strand" evidence="58">
    <location>
        <begin position="322"/>
        <end position="324"/>
    </location>
</feature>
<feature type="helix" evidence="64">
    <location>
        <begin position="327"/>
        <end position="331"/>
    </location>
</feature>
<feature type="strand" evidence="60">
    <location>
        <begin position="341"/>
        <end position="343"/>
    </location>
</feature>
<feature type="strand" evidence="64">
    <location>
        <begin position="346"/>
        <end position="350"/>
    </location>
</feature>
<feature type="helix" evidence="64">
    <location>
        <begin position="352"/>
        <end position="356"/>
    </location>
</feature>
<feature type="strand" evidence="65">
    <location>
        <begin position="358"/>
        <end position="360"/>
    </location>
</feature>
<feature type="strand" evidence="64">
    <location>
        <begin position="363"/>
        <end position="365"/>
    </location>
</feature>
<feature type="strand" evidence="64">
    <location>
        <begin position="367"/>
        <end position="369"/>
    </location>
</feature>
<feature type="strand" evidence="67">
    <location>
        <begin position="370"/>
        <end position="373"/>
    </location>
</feature>
<feature type="strand" evidence="65">
    <location>
        <begin position="376"/>
        <end position="379"/>
    </location>
</feature>
<feature type="helix" evidence="64">
    <location>
        <begin position="382"/>
        <end position="384"/>
    </location>
</feature>
<feature type="strand" evidence="58">
    <location>
        <begin position="385"/>
        <end position="387"/>
    </location>
</feature>
<feature type="strand" evidence="64">
    <location>
        <begin position="392"/>
        <end position="395"/>
    </location>
</feature>
<feature type="turn" evidence="64">
    <location>
        <begin position="396"/>
        <end position="398"/>
    </location>
</feature>
<feature type="strand" evidence="64">
    <location>
        <begin position="406"/>
        <end position="414"/>
    </location>
</feature>
<feature type="helix" evidence="64">
    <location>
        <begin position="415"/>
        <end position="417"/>
    </location>
</feature>
<feature type="strand" evidence="59">
    <location>
        <begin position="420"/>
        <end position="424"/>
    </location>
</feature>
<feature type="strand" evidence="71">
    <location>
        <begin position="426"/>
        <end position="433"/>
    </location>
</feature>
<reference key="1">
    <citation type="journal article" date="1983" name="Biochemistry">
        <title>Characterization of a complementary deoxyribonucleic acid coding for the gamma chain of human fibrinogen.</title>
        <authorList>
            <person name="Chung D.W."/>
            <person name="Chan W.-Y."/>
            <person name="Davie E.W."/>
        </authorList>
    </citation>
    <scope>NUCLEOTIDE SEQUENCE [GENOMIC DNA / MRNA]</scope>
</reference>
<reference key="2">
    <citation type="journal article" date="1985" name="Biochemistry">
        <title>Nucleotide sequence of the gene for the gamma chain of human fibrinogen.</title>
        <authorList>
            <person name="Rixon M.W."/>
            <person name="Chung D.W."/>
            <person name="Davie E.W."/>
        </authorList>
    </citation>
    <scope>NUCLEOTIDE SEQUENCE [GENOMIC DNA / MRNA] (ISOFORMS GAMMA-A AND GAMMA-B)</scope>
</reference>
<reference key="3">
    <citation type="journal article" date="2004" name="Nat. Genet.">
        <title>Complete sequencing and characterization of 21,243 full-length human cDNAs.</title>
        <authorList>
            <person name="Ota T."/>
            <person name="Suzuki Y."/>
            <person name="Nishikawa T."/>
            <person name="Otsuki T."/>
            <person name="Sugiyama T."/>
            <person name="Irie R."/>
            <person name="Wakamatsu A."/>
            <person name="Hayashi K."/>
            <person name="Sato H."/>
            <person name="Nagai K."/>
            <person name="Kimura K."/>
            <person name="Makita H."/>
            <person name="Sekine M."/>
            <person name="Obayashi M."/>
            <person name="Nishi T."/>
            <person name="Shibahara T."/>
            <person name="Tanaka T."/>
            <person name="Ishii S."/>
            <person name="Yamamoto J."/>
            <person name="Saito K."/>
            <person name="Kawai Y."/>
            <person name="Isono Y."/>
            <person name="Nakamura Y."/>
            <person name="Nagahari K."/>
            <person name="Murakami K."/>
            <person name="Yasuda T."/>
            <person name="Iwayanagi T."/>
            <person name="Wagatsuma M."/>
            <person name="Shiratori A."/>
            <person name="Sudo H."/>
            <person name="Hosoiri T."/>
            <person name="Kaku Y."/>
            <person name="Kodaira H."/>
            <person name="Kondo H."/>
            <person name="Sugawara M."/>
            <person name="Takahashi M."/>
            <person name="Kanda K."/>
            <person name="Yokoi T."/>
            <person name="Furuya T."/>
            <person name="Kikkawa E."/>
            <person name="Omura Y."/>
            <person name="Abe K."/>
            <person name="Kamihara K."/>
            <person name="Katsuta N."/>
            <person name="Sato K."/>
            <person name="Tanikawa M."/>
            <person name="Yamazaki M."/>
            <person name="Ninomiya K."/>
            <person name="Ishibashi T."/>
            <person name="Yamashita H."/>
            <person name="Murakawa K."/>
            <person name="Fujimori K."/>
            <person name="Tanai H."/>
            <person name="Kimata M."/>
            <person name="Watanabe M."/>
            <person name="Hiraoka S."/>
            <person name="Chiba Y."/>
            <person name="Ishida S."/>
            <person name="Ono Y."/>
            <person name="Takiguchi S."/>
            <person name="Watanabe S."/>
            <person name="Yosida M."/>
            <person name="Hotuta T."/>
            <person name="Kusano J."/>
            <person name="Kanehori K."/>
            <person name="Takahashi-Fujii A."/>
            <person name="Hara H."/>
            <person name="Tanase T.-O."/>
            <person name="Nomura Y."/>
            <person name="Togiya S."/>
            <person name="Komai F."/>
            <person name="Hara R."/>
            <person name="Takeuchi K."/>
            <person name="Arita M."/>
            <person name="Imose N."/>
            <person name="Musashino K."/>
            <person name="Yuuki H."/>
            <person name="Oshima A."/>
            <person name="Sasaki N."/>
            <person name="Aotsuka S."/>
            <person name="Yoshikawa Y."/>
            <person name="Matsunawa H."/>
            <person name="Ichihara T."/>
            <person name="Shiohata N."/>
            <person name="Sano S."/>
            <person name="Moriya S."/>
            <person name="Momiyama H."/>
            <person name="Satoh N."/>
            <person name="Takami S."/>
            <person name="Terashima Y."/>
            <person name="Suzuki O."/>
            <person name="Nakagawa S."/>
            <person name="Senoh A."/>
            <person name="Mizoguchi H."/>
            <person name="Goto Y."/>
            <person name="Shimizu F."/>
            <person name="Wakebe H."/>
            <person name="Hishigaki H."/>
            <person name="Watanabe T."/>
            <person name="Sugiyama A."/>
            <person name="Takemoto M."/>
            <person name="Kawakami B."/>
            <person name="Yamazaki M."/>
            <person name="Watanabe K."/>
            <person name="Kumagai A."/>
            <person name="Itakura S."/>
            <person name="Fukuzumi Y."/>
            <person name="Fujimori Y."/>
            <person name="Komiyama M."/>
            <person name="Tashiro H."/>
            <person name="Tanigami A."/>
            <person name="Fujiwara T."/>
            <person name="Ono T."/>
            <person name="Yamada K."/>
            <person name="Fujii Y."/>
            <person name="Ozaki K."/>
            <person name="Hirao M."/>
            <person name="Ohmori Y."/>
            <person name="Kawabata A."/>
            <person name="Hikiji T."/>
            <person name="Kobatake N."/>
            <person name="Inagaki H."/>
            <person name="Ikema Y."/>
            <person name="Okamoto S."/>
            <person name="Okitani R."/>
            <person name="Kawakami T."/>
            <person name="Noguchi S."/>
            <person name="Itoh T."/>
            <person name="Shigeta K."/>
            <person name="Senba T."/>
            <person name="Matsumura K."/>
            <person name="Nakajima Y."/>
            <person name="Mizuno T."/>
            <person name="Morinaga M."/>
            <person name="Sasaki M."/>
            <person name="Togashi T."/>
            <person name="Oyama M."/>
            <person name="Hata H."/>
            <person name="Watanabe M."/>
            <person name="Komatsu T."/>
            <person name="Mizushima-Sugano J."/>
            <person name="Satoh T."/>
            <person name="Shirai Y."/>
            <person name="Takahashi Y."/>
            <person name="Nakagawa K."/>
            <person name="Okumura K."/>
            <person name="Nagase T."/>
            <person name="Nomura N."/>
            <person name="Kikuchi H."/>
            <person name="Masuho Y."/>
            <person name="Yamashita R."/>
            <person name="Nakai K."/>
            <person name="Yada T."/>
            <person name="Nakamura Y."/>
            <person name="Ohara O."/>
            <person name="Isogai T."/>
            <person name="Sugano S."/>
        </authorList>
    </citation>
    <scope>NUCLEOTIDE SEQUENCE [LARGE SCALE MRNA] (ISOFORMS GAMMA-A AND GAMMA-B)</scope>
    <source>
        <tissue>Liver</tissue>
    </source>
</reference>
<reference key="4">
    <citation type="submission" date="1999-01" db="EMBL/GenBank/DDBJ databases">
        <title>Functional prediction of the coding sequences of 33 new genes deduced by analysis of cDNA clones from human fetal liver.</title>
        <authorList>
            <person name="Zhang C."/>
            <person name="Yu Y."/>
            <person name="Zhang S."/>
            <person name="Wei H."/>
            <person name="Zhou G."/>
            <person name="Bi J."/>
            <person name="Zhang Y."/>
            <person name="Liu M."/>
            <person name="He F."/>
        </authorList>
    </citation>
    <scope>NUCLEOTIDE SEQUENCE [LARGE SCALE MRNA] (ISOFORM GAMMA-A)</scope>
    <source>
        <tissue>Fetal liver</tissue>
    </source>
</reference>
<reference key="5">
    <citation type="submission" date="2003-05" db="EMBL/GenBank/DDBJ databases">
        <title>Cloning of human full-length CDSs in BD Creator(TM) system donor vector.</title>
        <authorList>
            <person name="Kalnine N."/>
            <person name="Chen X."/>
            <person name="Rolfs A."/>
            <person name="Halleck A."/>
            <person name="Hines L."/>
            <person name="Eisenstein S."/>
            <person name="Koundinya M."/>
            <person name="Raphael J."/>
            <person name="Moreira D."/>
            <person name="Kelley T."/>
            <person name="LaBaer J."/>
            <person name="Lin Y."/>
            <person name="Phelan M."/>
            <person name="Farmer A."/>
        </authorList>
    </citation>
    <scope>NUCLEOTIDE SEQUENCE [LARGE SCALE MRNA] (ISOFORM GAMMA-A)</scope>
</reference>
<reference key="6">
    <citation type="submission" date="2001-06" db="EMBL/GenBank/DDBJ databases">
        <authorList>
            <consortium name="SeattleSNPs variation discovery resource"/>
        </authorList>
    </citation>
    <scope>NUCLEOTIDE SEQUENCE [GENOMIC DNA]</scope>
    <scope>VARIANTS HIS-140 AND ARG-191</scope>
</reference>
<reference key="7">
    <citation type="submission" date="2005-09" db="EMBL/GenBank/DDBJ databases">
        <authorList>
            <person name="Mural R.J."/>
            <person name="Istrail S."/>
            <person name="Sutton G.G."/>
            <person name="Florea L."/>
            <person name="Halpern A.L."/>
            <person name="Mobarry C.M."/>
            <person name="Lippert R."/>
            <person name="Walenz B."/>
            <person name="Shatkay H."/>
            <person name="Dew I."/>
            <person name="Miller J.R."/>
            <person name="Flanigan M.J."/>
            <person name="Edwards N.J."/>
            <person name="Bolanos R."/>
            <person name="Fasulo D."/>
            <person name="Halldorsson B.V."/>
            <person name="Hannenhalli S."/>
            <person name="Turner R."/>
            <person name="Yooseph S."/>
            <person name="Lu F."/>
            <person name="Nusskern D.R."/>
            <person name="Shue B.C."/>
            <person name="Zheng X.H."/>
            <person name="Zhong F."/>
            <person name="Delcher A.L."/>
            <person name="Huson D.H."/>
            <person name="Kravitz S.A."/>
            <person name="Mouchard L."/>
            <person name="Reinert K."/>
            <person name="Remington K.A."/>
            <person name="Clark A.G."/>
            <person name="Waterman M.S."/>
            <person name="Eichler E.E."/>
            <person name="Adams M.D."/>
            <person name="Hunkapiller M.W."/>
            <person name="Myers E.W."/>
            <person name="Venter J.C."/>
        </authorList>
    </citation>
    <scope>NUCLEOTIDE SEQUENCE [LARGE SCALE GENOMIC DNA]</scope>
</reference>
<reference key="8">
    <citation type="journal article" date="2004" name="Genome Res.">
        <title>The status, quality, and expansion of the NIH full-length cDNA project: the Mammalian Gene Collection (MGC).</title>
        <authorList>
            <consortium name="The MGC Project Team"/>
        </authorList>
    </citation>
    <scope>NUCLEOTIDE SEQUENCE [LARGE SCALE MRNA] (ISOFORM GAMMA-A)</scope>
    <source>
        <tissue>Skeletal muscle</tissue>
    </source>
</reference>
<reference key="9">
    <citation type="book" date="1980" name="Protides of the biological fluids, Proc. 28th colloquium">
        <title>Human fibrinogen: sequence, sulfur bridges, glycosylation and some structural variants.</title>
        <editorList>
            <person name="Peeters H."/>
        </editorList>
        <authorList>
            <person name="Henschen A."/>
            <person name="Lottspeich F."/>
            <person name="Southan C."/>
            <person name="Topfer-Petersen E."/>
        </authorList>
    </citation>
    <scope>PROTEIN SEQUENCE OF 27-437</scope>
</reference>
<reference key="10">
    <citation type="journal article" date="1993" name="J. Cell Biol.">
        <title>Evidence for the selective association of a subpopulation of GPIIb-IIIa with the actin cytoskeletons of thrombin-activated platelets.</title>
        <authorList>
            <person name="Bertagnolli M.E."/>
            <person name="Beckerle M.C."/>
        </authorList>
    </citation>
    <scope>PROTEIN SEQUENCE OF 27-41</scope>
    <source>
        <tissue>Platelet</tissue>
    </source>
</reference>
<reference key="11">
    <citation type="journal article" date="1991" name="DNA Seq.">
        <title>Polymorphism of the human gamma chain fibrinogen gene.</title>
        <authorList>
            <person name="Marchetti L."/>
            <person name="Zanelli T."/>
            <person name="Malcovati M."/>
            <person name="Tenchini M.L."/>
        </authorList>
    </citation>
    <scope>NUCLEOTIDE SEQUENCE [MRNA] OF 75-286</scope>
    <source>
        <tissue>Liver</tissue>
    </source>
</reference>
<reference key="12">
    <citation type="journal article" date="1983" name="Nucleic Acids Res.">
        <title>Isolation and characterisation of cDNA clones for the A alpha- and gamma-chains of human fibrinogen.</title>
        <authorList>
            <person name="Imam A.M.A."/>
            <person name="Eaton M.A.W."/>
            <person name="Williamson R."/>
            <person name="Humphries S."/>
        </authorList>
    </citation>
    <scope>NUCLEOTIDE SEQUENCE [GENOMIC DNA / MRNA] OF 209-270</scope>
</reference>
<reference key="13">
    <citation type="journal article" date="1984" name="J. Biol. Chem.">
        <title>Structure of the human gamma-fibrinogen gene. Alternate mRNA splicing near the 3' end of the gene produces gamma A and gamma B forms of gamma-fibrinogen.</title>
        <authorList>
            <person name="Fornace A.J. Jr."/>
            <person name="Cummings D.E."/>
            <person name="Comeau C.M."/>
            <person name="Kant J.A."/>
            <person name="Crabtree G.R."/>
        </authorList>
    </citation>
    <scope>NUCLEOTIDE SEQUENCE [GENOMIC DNA] OF 285-437 (ISOFORMS GAMMA-A AND GAMMA-B)</scope>
</reference>
<reference key="14">
    <citation type="journal article" date="1995" name="Blood Coagul. Fibrinolysis">
        <title>Abnormal polymerization and normal binding of plasminogen and t-PA in three new dysfibrinogenaemias: Barcelona III and IV (gamma Arg 275--&gt;His) and Villajoyosa (gamma Arg 275--&gt;Cys).</title>
        <authorList>
            <person name="Borrell M."/>
            <person name="Gari M."/>
            <person name="Coll I."/>
            <person name="Vallve C."/>
            <person name="Tirado I."/>
            <person name="Soria J.M."/>
            <person name="Sala N."/>
            <person name="Munoz C."/>
            <person name="Oliver A."/>
            <person name="Garcia A."/>
        </authorList>
    </citation>
    <scope>PROTEIN SEQUENCE OF 291-310</scope>
    <scope>VARIANTS HIS-301 AND CYS-301</scope>
    <source>
        <tissue>Blood</tissue>
    </source>
</reference>
<reference key="15">
    <citation type="journal article" date="1981" name="Biochemistry">
        <title>Carboxy-terminal amino acid sequence of a human fibrinogen gamma-chain variant (gamma').</title>
        <authorList>
            <person name="Wolfenstein-Todel C."/>
            <person name="Mosesson M.W."/>
        </authorList>
    </citation>
    <scope>PROTEIN SEQUENCE OF 411-453 (ISOFORM GAMMA-B)</scope>
</reference>
<reference key="16">
    <citation type="journal article" date="1983" name="Ann. N. Y. Acad. Sci.">
        <title>Covalent structure of fibrinogen.</title>
        <authorList>
            <person name="Henschen A."/>
            <person name="Lottspeich F."/>
            <person name="Kehl M."/>
            <person name="Southan C."/>
        </authorList>
    </citation>
    <scope>REVIEW</scope>
    <scope>DISULFIDE BONDS</scope>
</reference>
<reference key="17">
    <citation type="book" date="1978" name="Regulatory proteolytic enzymes and their inhibitors">
        <title>The structures of fibrinogen and fibrin.</title>
        <editorList>
            <person name="Magnusson S."/>
            <person name="Ottesen M."/>
            <person name="Foltmann B."/>
            <person name="Dano K."/>
            <person name="Neurath H."/>
        </editorList>
        <authorList>
            <person name="Doolittle R.F."/>
            <person name="Takagi T."/>
            <person name="Watt K.W.K."/>
            <person name="Bouma H. III"/>
            <person name="Cottrell B.A."/>
            <person name="Cassman K.G."/>
            <person name="Goldbaum D.M."/>
            <person name="Doolittle L.R."/>
            <person name="Friezner S.J."/>
        </authorList>
    </citation>
    <scope>DISULFIDE BONDS</scope>
</reference>
<reference key="18">
    <citation type="journal article" date="1976" name="Thromb. Res.">
        <title>Disulfide bridges in NH2-terminal part of human fibrinogen.</title>
        <authorList>
            <person name="Blombaeck B."/>
            <person name="Hessel B."/>
            <person name="Hogg D."/>
        </authorList>
    </citation>
    <scope>DISULFIDE BONDS</scope>
</reference>
<reference key="19">
    <citation type="journal article" date="1983" name="Biochemistry">
        <title>Dimeric half-molecules of human fibrinogen are joined through disulfide bonds in an antiparallel orientation.</title>
        <authorList>
            <person name="Hoeprich P.D."/>
            <person name="Doolittle R.F."/>
        </authorList>
    </citation>
    <scope>QUATERNARY STRUCTURE</scope>
    <scope>DISULFIDE BONDS</scope>
</reference>
<reference key="20">
    <citation type="journal article" date="1991" name="Biochemistry">
        <title>Recombinant human fibrinogen and sulfation of the gamma' chain.</title>
        <authorList>
            <person name="Farrel D.H."/>
            <person name="Mulvihill E.R."/>
            <person name="Huang S."/>
            <person name="Chung D.W."/>
            <person name="Davie E.W."/>
        </authorList>
    </citation>
    <scope>SULFATION</scope>
</reference>
<reference key="21">
    <citation type="journal article" date="2001" name="Thromb. Haemost.">
        <title>The amino acid sequence in fibrin responsible for high affinity thrombin binding.</title>
        <authorList>
            <person name="Meh D.A."/>
            <person name="Siebenlist K.R."/>
            <person name="Brennan S.O."/>
            <person name="Holyst T."/>
            <person name="Mosesson M.W."/>
        </authorList>
    </citation>
    <scope>SULFATION AT TYR-444 AND TYR-448</scope>
</reference>
<reference key="22">
    <citation type="journal article" date="1984" name="Annu. Rev. Biochem.">
        <title>Fibrinogen and fibrin.</title>
        <authorList>
            <person name="Doolittle R.F."/>
        </authorList>
    </citation>
    <scope>REVIEW</scope>
    <scope>ELECTRON MICROSCOPY</scope>
    <scope>POLYMERIZATION</scope>
    <scope>LIGANDS</scope>
</reference>
<reference key="23">
    <citation type="journal article" date="1984" name="Proc. Natl. Acad. Sci. U.S.A.">
        <title>Localization of a fibrin gamma-chain polymerization site within segment Thr-374 to Glu-396 of human fibrinogen.</title>
        <authorList>
            <person name="Horwitz B.H."/>
            <person name="Varadi A."/>
            <person name="Scheraga H.A."/>
        </authorList>
    </citation>
    <scope>POLYMERIZATION SITE</scope>
</reference>
<reference key="24">
    <citation type="journal article" date="1981" name="J. Biol. Chem.">
        <title>Localization of a fibrin polymerization site.</title>
        <authorList>
            <person name="Olexa S.A."/>
            <person name="Budzynski A.Z."/>
        </authorList>
    </citation>
    <scope>POLYMERIZATION SITE</scope>
</reference>
<reference key="25">
    <citation type="journal article" date="1984" name="Biochemistry">
        <title>Platelet receptor recognition site on human fibrinogen. Synthesis and structure-function relationship of peptides corresponding to the carboxy-terminal segment of the gamma chain.</title>
        <authorList>
            <person name="Kloczewiak M."/>
            <person name="Timmons S."/>
            <person name="Lukas T.J."/>
            <person name="Hawiger J."/>
        </authorList>
    </citation>
    <scope>PLATELET AGGREGATION SITE</scope>
</reference>
<reference key="26">
    <citation type="journal article" date="1984" name="J. Biol. Chem.">
        <title>Evidence that three adhesive proteins interact with a common recognition site on activated platelets.</title>
        <authorList>
            <person name="Plow E.F."/>
            <person name="Srouji A.H."/>
            <person name="Meyer D."/>
            <person name="Marguerie G."/>
            <person name="Ginsberg M.H."/>
        </authorList>
    </citation>
    <scope>PLATELET AGGREGATION SITE</scope>
</reference>
<reference key="27">
    <citation type="journal article" date="1985" name="J. Biol. Chem.">
        <title>Localization of a fibrinogen calcium binding site between gamma-subunit positions 311 and 336 by terbium fluorescence.</title>
        <authorList>
            <person name="Dang C.V."/>
            <person name="Ebert R.F."/>
            <person name="Bell W.R."/>
        </authorList>
    </citation>
    <scope>CALCIUM-BINDING SITE</scope>
</reference>
<reference key="28">
    <citation type="journal article" date="1980" name="Proc. Natl. Acad. Sci. U.S.A.">
        <title>Human plasma fibrinogen heterogeneity: evidence for an extended carboxyl-terminal sequence in a normal gamma chain variant (gamma').</title>
        <authorList>
            <person name="Wolfenstein-Todel C."/>
            <person name="Mosesson M.W."/>
        </authorList>
    </citation>
    <scope>CHROMATOGRAPHIC COMPARISON OF GAMMA-A AND GAMMA-B CHAINS</scope>
</reference>
<reference key="29">
    <citation type="journal article" date="2004" name="Proteomics">
        <title>Screening for N-glycosylated proteins by liquid chromatography mass spectrometry.</title>
        <authorList>
            <person name="Bunkenborg J."/>
            <person name="Pilch B.J."/>
            <person name="Podtelejnikov A.V."/>
            <person name="Wisniewski J.R."/>
        </authorList>
    </citation>
    <scope>GLYCOSYLATION [LARGE SCALE ANALYSIS] AT ASN-78</scope>
    <source>
        <tissue>Plasma</tissue>
    </source>
</reference>
<reference key="30">
    <citation type="journal article" date="2005" name="J. Proteome Res.">
        <title>Human plasma N-glycoproteome analysis by immunoaffinity subtraction, hydrazide chemistry, and mass spectrometry.</title>
        <authorList>
            <person name="Liu T."/>
            <person name="Qian W.-J."/>
            <person name="Gritsenko M.A."/>
            <person name="Camp D.G. II"/>
            <person name="Monroe M.E."/>
            <person name="Moore R.J."/>
            <person name="Smith R.D."/>
        </authorList>
    </citation>
    <scope>GLYCOSYLATION [LARGE SCALE ANALYSIS] AT ASN-78</scope>
    <source>
        <tissue>Plasma</tissue>
    </source>
</reference>
<reference key="31">
    <citation type="journal article" date="2006" name="Mol. Cell. Proteomics">
        <title>Elucidation of N-glycosylation sites on human platelet proteins: a glycoproteomic approach.</title>
        <authorList>
            <person name="Lewandrowski U."/>
            <person name="Moebius J."/>
            <person name="Walter U."/>
            <person name="Sickmann A."/>
        </authorList>
    </citation>
    <scope>GLYCOSYLATION [LARGE SCALE ANALYSIS] AT ASN-78</scope>
    <source>
        <tissue>Platelet</tissue>
    </source>
</reference>
<reference key="32">
    <citation type="journal article" date="2008" name="Proteomics">
        <title>Identification of N-linked glycoproteins in human milk by hydrophilic interaction liquid chromatography and mass spectrometry.</title>
        <authorList>
            <person name="Picariello G."/>
            <person name="Ferranti P."/>
            <person name="Mamone G."/>
            <person name="Roepstorff P."/>
            <person name="Addeo F."/>
        </authorList>
    </citation>
    <scope>GLYCOSYLATION [LARGE SCALE ANALYSIS] AT ASN-78</scope>
    <source>
        <tissue>Milk</tissue>
    </source>
</reference>
<reference key="33">
    <citation type="journal article" date="2009" name="J. Proteome Res.">
        <title>Glycoproteomics analysis of human liver tissue by combination of multiple enzyme digestion and hydrazide chemistry.</title>
        <authorList>
            <person name="Chen R."/>
            <person name="Jiang X."/>
            <person name="Sun D."/>
            <person name="Han G."/>
            <person name="Wang F."/>
            <person name="Ye M."/>
            <person name="Wang L."/>
            <person name="Zou H."/>
        </authorList>
    </citation>
    <scope>GLYCOSYLATION [LARGE SCALE ANALYSIS] AT ASN-78</scope>
    <source>
        <tissue>Liver</tissue>
    </source>
</reference>
<reference key="34">
    <citation type="journal article" date="2009" name="Mol. Cell. Proteomics">
        <title>A strategy for precise and large scale identification of core fucosylated glycoproteins.</title>
        <authorList>
            <person name="Jia W."/>
            <person name="Lu Z."/>
            <person name="Fu Y."/>
            <person name="Wang H.P."/>
            <person name="Wang L.H."/>
            <person name="Chi H."/>
            <person name="Yuan Z.F."/>
            <person name="Zheng Z.B."/>
            <person name="Song L.N."/>
            <person name="Han H.H."/>
            <person name="Liang Y.M."/>
            <person name="Wang J.L."/>
            <person name="Cai Y."/>
            <person name="Zhang Y.K."/>
            <person name="Deng Y.L."/>
            <person name="Ying W.T."/>
            <person name="He S.M."/>
            <person name="Qian X.H."/>
        </authorList>
    </citation>
    <scope>GLYCOSYLATION AT ASN-78</scope>
</reference>
<reference key="35">
    <citation type="journal article" date="1990" name="J. Biol. Chem.">
        <title>A unique proteolytic fragment of human fibrinogen containing the A alpha COOH-terminal domain of the native molecule.</title>
        <authorList>
            <person name="Kirschbaum N.E."/>
            <person name="Budzynski A.Z."/>
        </authorList>
    </citation>
    <scope>CLEAVAGE BY HEMENTIN AND PLASMIN</scope>
</reference>
<reference key="36">
    <citation type="journal article" date="2011" name="BMC Syst. Biol.">
        <title>Initial characterization of the human central proteome.</title>
        <authorList>
            <person name="Burkard T.R."/>
            <person name="Planyavsky M."/>
            <person name="Kaupe I."/>
            <person name="Breitwieser F.P."/>
            <person name="Buerckstuemmer T."/>
            <person name="Bennett K.L."/>
            <person name="Superti-Furga G."/>
            <person name="Colinge J."/>
        </authorList>
    </citation>
    <scope>IDENTIFICATION BY MASS SPECTROMETRY [LARGE SCALE ANALYSIS]</scope>
</reference>
<reference key="37">
    <citation type="journal article" date="2014" name="J. Proteomics">
        <title>An enzyme assisted RP-RPLC approach for in-depth analysis of human liver phosphoproteome.</title>
        <authorList>
            <person name="Bian Y."/>
            <person name="Song C."/>
            <person name="Cheng K."/>
            <person name="Dong M."/>
            <person name="Wang F."/>
            <person name="Huang J."/>
            <person name="Sun D."/>
            <person name="Wang L."/>
            <person name="Ye M."/>
            <person name="Zou H."/>
        </authorList>
    </citation>
    <scope>IDENTIFICATION BY MASS SPECTROMETRY [LARGE SCALE ANALYSIS]</scope>
    <source>
        <tissue>Liver</tissue>
    </source>
</reference>
<reference key="38">
    <citation type="journal article" date="2015" name="Cell">
        <title>A single kinase generates the majority of the secreted phosphoproteome.</title>
        <authorList>
            <person name="Tagliabracci V.S."/>
            <person name="Wiley S.E."/>
            <person name="Guo X."/>
            <person name="Kinch L.N."/>
            <person name="Durrant E."/>
            <person name="Wen J."/>
            <person name="Xiao J."/>
            <person name="Cui J."/>
            <person name="Nguyen K.B."/>
            <person name="Engel J.L."/>
            <person name="Coon J.J."/>
            <person name="Grishin N."/>
            <person name="Pinna L.A."/>
            <person name="Pagliarini D.J."/>
            <person name="Dixon J.E."/>
        </authorList>
    </citation>
    <scope>PHOSPHORYLATION AT SER-68</scope>
</reference>
<reference key="39">
    <citation type="journal article" date="1997" name="Structure">
        <title>Crystal structure of a 30 kDa C-terminal fragment from the gamma chain of human fibrinogen.</title>
        <authorList>
            <person name="Yee V.C."/>
            <person name="Pratt K.P."/>
            <person name="Cote H.C.F."/>
            <person name="le Trong I."/>
            <person name="Chung D.W."/>
            <person name="Davie E.W."/>
            <person name="Stenkamp R.E."/>
            <person name="Teller D.C."/>
        </authorList>
    </citation>
    <scope>X-RAY CRYSTALLOGRAPHY (2.10 ANGSTROMS) OF 169-433 IN COMPLEX WITH CALCIUM</scope>
    <scope>DISULFIDE BONDS</scope>
    <scope>SUBUNIT</scope>
</reference>
<reference key="40">
    <citation type="journal article" date="1997" name="Proc. Natl. Acad. Sci. U.S.A.">
        <title>The primary fibrin polymerization pocket: three-dimensional structure of a 30-kDa C-terminal gamma chain fragment complexed with the peptide Gly-Pro-Arg-Pro.</title>
        <authorList>
            <person name="Pratt K.P."/>
            <person name="Cote H.C.F."/>
            <person name="Chung D.W."/>
            <person name="Stenkamp R.E."/>
            <person name="Davie E.W."/>
        </authorList>
    </citation>
    <scope>X-RAY CRYSTALLOGRAPHY (2.01 ANGSTROMS) OF 169-433 IN COMPLEX WITH CALCIUM</scope>
    <scope>DISULFIDE BONDS</scope>
    <scope>SUBUNIT</scope>
</reference>
<reference key="41">
    <citation type="journal article" date="1997" name="Nature">
        <title>Crystal structures of fragment D from human fibrinogen and its crosslinked counterpart from fibrin.</title>
        <authorList>
            <person name="Spraggon G."/>
            <person name="Everse S.J."/>
            <person name="Doolittle R.F."/>
        </authorList>
    </citation>
    <scope>X-RAY CRYSTALLOGRAPHY (2.90 ANGSTROMS) OF 114-432 IN COMPLEX WITH CALCIUM</scope>
    <scope>DISULFIDE BONDS</scope>
    <scope>SUBUNIT</scope>
</reference>
<reference key="42">
    <citation type="journal article" date="1998" name="Biochemistry">
        <title>Crystal structure of fragment double-D from human fibrin with two different bound ligands.</title>
        <authorList>
            <person name="Everse S.J."/>
            <person name="Spraggon G."/>
            <person name="Veerapandian L."/>
            <person name="Riley M."/>
            <person name="Doolittle R.F."/>
        </authorList>
    </citation>
    <scope>X-RAY CRYSTALLOGRAPHY (2.30 ANGSTROMS) OF 114-432 IN COMPLEX WITH CALCIUM</scope>
    <scope>DISULFIDE BONDS</scope>
    <scope>SUBUNIT</scope>
    <scope>DOMAIN</scope>
    <scope>SUBCELLULAR LOCATION</scope>
    <scope>TISSUE SPECIFICITY</scope>
</reference>
<reference key="43">
    <citation type="journal article" date="1999" name="Biochemistry">
        <title>Conformational changes in fragments D and double-D from human fibrin(ogen) upon binding the peptide ligand Gly-His-Arg-Pro-amide.</title>
        <authorList>
            <person name="Everse S.J."/>
            <person name="Spraggon G."/>
            <person name="Veerapandian L."/>
            <person name="Doolittle R.F."/>
        </authorList>
    </citation>
    <scope>X-RAY CRYSTALLOGRAPHY (2.50 ANGSTROMS) OF 114-432 IN COMPLEX WITH CALCIUM</scope>
    <scope>DISULFIDE BONDS</scope>
    <scope>SUBUNIT</scope>
    <scope>SUBCELLULAR LOCATION</scope>
    <scope>TISSUE SPECIFICITY</scope>
</reference>
<reference key="44">
    <citation type="journal article" date="2009" name="Biochemistry">
        <title>Crystal structure of human fibrinogen.</title>
        <authorList>
            <person name="Kollman J.M."/>
            <person name="Pandi L."/>
            <person name="Sawaya M.R."/>
            <person name="Riley M."/>
            <person name="Doolittle R.F."/>
        </authorList>
    </citation>
    <scope>X-RAY CRYSTALLOGRAPHY (2.90 ANGSTROMS) OF 27-433 IN COMPLEX WITH CALCIUM</scope>
    <scope>DISULFIDE BONDS</scope>
    <scope>SUBUNIT</scope>
    <scope>DOMAIN</scope>
    <scope>SUBCELLULAR LOCATION</scope>
    <scope>TISSUE SPECIFICITY</scope>
</reference>
<reference key="45">
    <citation type="journal article" date="1989" name="J. Clin. Invest.">
        <title>A gamma methionine-310 to threonine substitution and consequent N-glycosylation at gamma asparagine-308 identified in a congenital dysfibrinogenemia associated with posttraumatic bleeding, fibrinogen Asahi.</title>
        <authorList>
            <person name="Yamazumi K."/>
            <person name="Shimura K."/>
            <person name="Terukina S."/>
            <person name="Takahashi N."/>
            <person name="Matsuda M."/>
        </authorList>
    </citation>
    <scope>VARIANT THR-336</scope>
</reference>
<reference key="46">
    <citation type="journal article" date="1992" name="Int. J. Hematol.">
        <title>Gene analyses of abnormal fibrinogens with a mutation in the gamma chain.</title>
        <authorList>
            <person name="Mimuro J."/>
            <person name="Muramatsu S."/>
            <person name="Maekawa H."/>
            <person name="Sakata Y."/>
            <person name="Kaneko M."/>
            <person name="Yoshitake S."/>
            <person name="Okuma M."/>
            <person name="Ito Y."/>
            <person name="Takeda Y."/>
            <person name="Matsuda M."/>
        </authorList>
    </citation>
    <scope>VARIANTS CYS-301; LYS-334; THR-336 AND TYR-356</scope>
</reference>
<reference key="47">
    <citation type="journal article" date="1990" name="Blood">
        <title>Fibrinogen Baltimore I: polymerization defect associated with a gamma 292Gly--&gt;Val (GGC--&gt;GTC) mutation.</title>
        <authorList>
            <person name="Bantia S."/>
            <person name="Mane S.M."/>
            <person name="Bell W.R."/>
            <person name="Dang C.V."/>
        </authorList>
    </citation>
    <scope>INVOLVEMENT IN DYSFIBRIN</scope>
    <scope>VARIANT DYSFIBRIN VAL-318</scope>
</reference>
<reference key="48">
    <citation type="journal article" date="1990" name="Blood">
        <title>Polymerization defect of fibrinogen Baltimore III due to a gamma Asn308--&gt;Ile mutation.</title>
        <authorList>
            <person name="Bantia S."/>
            <person name="Bell W.R."/>
            <person name="Dang C.V."/>
        </authorList>
    </citation>
    <scope>VARIANT BALTIMORE-3 ILE-334</scope>
</reference>
<reference key="49">
    <citation type="journal article" date="1993" name="Blood">
        <title>Fibrinogen Bern I: substitution gamma 337 Asn--&gt;Lys is responsible for defective fibrin monomer polymerization.</title>
        <authorList>
            <person name="Steinmann C."/>
            <person name="Reber P."/>
            <person name="Jungo M."/>
            <person name="Laemmle B."/>
            <person name="Heinemann G."/>
            <person name="Wermuth B."/>
            <person name="Furlan M."/>
        </authorList>
    </citation>
    <scope>VARIANT BERN-1 LYS-363</scope>
</reference>
<reference key="50">
    <citation type="journal article" date="1988" name="J. Biol. Chem.">
        <title>Characterization of an apparently lower molecular weight gamma-chain variant in fibrinogen Kyoto I. The replacement of gamma-asparagine 308 by lysine which causes accelerated cleavage of fragment D1 by plasmin and the generation of a new plasmin cleavage site.</title>
        <authorList>
            <person name="Yoshida N."/>
            <person name="Terukina S."/>
            <person name="Okuma M."/>
            <person name="Moroi M."/>
            <person name="Aoki N."/>
            <person name="Matsuda M."/>
        </authorList>
    </citation>
    <scope>VARIANT KYOTO-1 LYS-334</scope>
</reference>
<reference key="51">
    <citation type="journal article" date="1989" name="Blood">
        <title>Fibrinogen Kyoto III: a congenital dysfibrinogen with a gamma aspartic acid-330 to tyrosine substitution manifesting impaired fibrin monomer polymerization.</title>
        <authorList>
            <person name="Terukina S."/>
            <person name="Yamazumi K."/>
            <person name="Okamoto K."/>
            <person name="Yamashita H."/>
            <person name="Ito Y."/>
            <person name="Matsuda M."/>
        </authorList>
    </citation>
    <scope>VARIANT KYOTO-3 TYR-356</scope>
</reference>
<reference key="52">
    <citation type="journal article" date="1986" name="Blood">
        <title>Characterization of fibrinogen Milano I: amino acid exchange gamma 330 Asp--&gt;Val impairs fibrin polymerization.</title>
        <authorList>
            <person name="Reber P."/>
            <person name="Furlan M."/>
            <person name="Rupp C."/>
            <person name="Kehl M."/>
            <person name="Henschen A."/>
            <person name="Mannucci P.M."/>
            <person name="Beck E.A."/>
        </authorList>
    </citation>
    <scope>VARIANT DYSFIBRIN VAL-356</scope>
</reference>
<reference key="53">
    <citation type="journal article" date="1994" name="Blood Coagul. Fibrinolysis">
        <title>Fibrinogen Milano V: a congenital dysfibrinogenaemia with a gamma 275 Arg--&gt;Cys substitution.</title>
        <authorList>
            <person name="Steinmann C."/>
            <person name="Boegli C."/>
            <person name="Jungo M."/>
            <person name="Laemmle B."/>
            <person name="Heinemann G."/>
            <person name="Wermuth B."/>
            <person name="Redaelli R."/>
            <person name="Baudo F."/>
            <person name="Furlan M."/>
        </authorList>
    </citation>
    <scope>VARIANT MILANO-5 CYS-301</scope>
</reference>
<reference key="54">
    <citation type="journal article" date="1994" name="Blood">
        <title>A new substitution, gamma 358 Ser--&gt;Cys, in fibrinogen Milano VII causes defective fibrin polymerization.</title>
        <authorList>
            <person name="Steinmann C."/>
            <person name="Boegli C."/>
            <person name="Jungo M."/>
            <person name="Laemmle B."/>
            <person name="Heinemann G."/>
            <person name="Wermuth B."/>
            <person name="Redaelli R."/>
            <person name="Baudo F."/>
            <person name="Furlan M."/>
        </authorList>
    </citation>
    <scope>VARIANT MILANO-7 CYS-384</scope>
</reference>
<reference key="55">
    <citation type="journal article" date="1989" name="J. Biochem.">
        <title>Fibrinogen Nagoya, a replacement of glutamine-329 by arginine in the gamma-chain that impairs the polymerization of fibrin monomer.</title>
        <authorList>
            <person name="Miyata T."/>
            <person name="Furukawa K."/>
            <person name="Iwanaga S."/>
            <person name="Takamatsu J."/>
            <person name="Saito H."/>
        </authorList>
    </citation>
    <scope>VARIANT NAGOYA-1 ARG-355</scope>
</reference>
<reference key="56">
    <citation type="journal article" date="1988" name="J. Biol. Chem.">
        <title>Substitution of gamma Arg-275 by Cys in an abnormal fibrinogen, 'fibrinogen Osaka II'. Evidence for a unique solitary cystine structure at the mutation site.</title>
        <authorList>
            <person name="Terukina S."/>
            <person name="Matsuda M."/>
            <person name="Hirata H."/>
            <person name="Takeda Y."/>
            <person name="Miyata T."/>
            <person name="Takao T."/>
            <person name="Shimonishi Y."/>
        </authorList>
    </citation>
    <scope>VARIANT OSAKA-2 CYS-301</scope>
</reference>
<reference key="57">
    <citation type="journal article" date="1992" name="Thromb. Haemost.">
        <title>Heterozygous abnormal fibrinogen Osaka III with the replacement of gamma arginine-275 by histidine has an apparently higher molecular weight gamma-chain variant.</title>
        <authorList>
            <person name="Yoshida N."/>
            <person name="Imoka S."/>
            <person name="Hirata H."/>
            <person name="Matsuda M."/>
            <person name="Asakura S."/>
        </authorList>
    </citation>
    <scope>VARIANT OSAKA-3 HIS-301</scope>
</reference>
<reference key="58">
    <citation type="journal article" date="1992" name="J. Biol. Chem.">
        <title>Characterization of an abnormal fibrinogen Osaka V with the replacement of gamma-arginine 375 by glycine. The lack of high affinity calcium binding to D-domains and the lack of protective effect of calcium on fibrinolysis.</title>
        <authorList>
            <person name="Yoshida N."/>
            <person name="Hirata H."/>
            <person name="Morigami Y."/>
            <person name="Imaoka S."/>
            <person name="Matsuda M."/>
            <person name="Yamazumi K."/>
            <person name="Asakura S."/>
        </authorList>
    </citation>
    <scope>VARIANT OSAKA-5 GLY-401</scope>
</reference>
<reference key="59">
    <citation type="journal article" date="1993" name="Thromb. Haemost.">
        <title>Paris I dysfibrinogenemia: a point mutation in intron 8 results in insertion of a 15 amino acid sequence in the fibrinogen gamma-chain.</title>
        <authorList>
            <person name="Rosenberg J.B."/>
            <person name="Newman P.J."/>
            <person name="Mosesson M.W."/>
            <person name="Guillin M.-C."/>
            <person name="Amrani D.L."/>
        </authorList>
    </citation>
    <scope>VARIANT PARIS-1 GLY-377 DELINS VAL-MET-CYS-GLY-GLU-ALA-LEU-PRO-MET-LEU-LYS-ASP-PRO-CYS-TYR-SER</scope>
</reference>
<reference key="60">
    <citation type="journal article" date="1988" name="Blood">
        <title>An apparently higher molecular weight gamma-chain variant in a new congenital abnormal fibrinogen Tochigi characterized by the replacement of gamma arginine-275 by cysteine.</title>
        <authorList>
            <person name="Yoshida N."/>
            <person name="Ota K."/>
            <person name="Moroi M."/>
            <person name="Matsuda M."/>
        </authorList>
    </citation>
    <scope>VARIANT TOCHIGI CYS-301</scope>
</reference>
<reference key="61">
    <citation type="journal article" date="1991" name="J. Biol. Chem.">
        <title>A congenitally abnormal fibrinogen (Vlissingen) with a 6-base deletion in the gamma-chain gene, causing defective calcium binding and impaired fibrin polymerization.</title>
        <authorList>
            <person name="Koopman J."/>
            <person name="Haverkate F."/>
            <person name="Briet E."/>
            <person name="Lord S.T."/>
        </authorList>
    </citation>
    <scope>VARIANT VLISSINGEN 345-ASN-ASP-346 DEL</scope>
</reference>
<reference key="62">
    <citation type="journal article" date="1986" name="Thromb. Haemost.">
        <title>Three abnormal fibrinogen variants with the same amino acid substitution (gamma 275 Arg--&gt;His): fibrinogens Bergamo II, Essen and Perugia.</title>
        <authorList>
            <person name="Reber P."/>
            <person name="Furlan M."/>
            <person name="Henschen A."/>
            <person name="Kaudewitz H."/>
            <person name="Barbui T."/>
            <person name="Hilgard P."/>
            <person name="Nenci G.G."/>
            <person name="Berrettini M."/>
            <person name="Beck E.A."/>
        </authorList>
    </citation>
    <scope>VARIANT BERGAMO-2/ESSEN/HAIFA/PERUGIA HIS-301</scope>
</reference>
<reference key="63">
    <citation type="journal article" date="1988" name="Thromb. Haemost.">
        <title>Normal plasmic cleavage of the gamma-chain variant of 'fibrinogen Saga' with an Arg-275 to His substitution.</title>
        <authorList>
            <person name="Yamazumi K."/>
            <person name="Terukina S."/>
            <person name="Onohara S."/>
            <person name="Matsuda M."/>
        </authorList>
    </citation>
    <scope>INVOLVEMENT IN DYSFIBRIN</scope>
    <scope>VARIANT DYSFIBRIN HIS-301</scope>
</reference>
<reference key="64">
    <citation type="journal article" date="2001" name="Blood">
        <title>Fibrinogen Milano XII: a dysfunctional variant containing 2 amino acid substitutions, A-alpha R16C and gamma G165R.</title>
        <authorList>
            <person name="Bolliger-Stucki B."/>
            <person name="Lord S.T."/>
            <person name="Furlan M."/>
        </authorList>
    </citation>
    <scope>VARIANT MILANO-12 ARG-191</scope>
</reference>
<reference key="65">
    <citation type="journal article" date="1999" name="Nat. Genet.">
        <title>Characterization of single-nucleotide polymorphisms in coding regions of human genes.</title>
        <authorList>
            <person name="Cargill M."/>
            <person name="Altshuler D."/>
            <person name="Ireland J."/>
            <person name="Sklar P."/>
            <person name="Ardlie K."/>
            <person name="Patil N."/>
            <person name="Shaw N."/>
            <person name="Lane C.R."/>
            <person name="Lim E.P."/>
            <person name="Kalyanaraman N."/>
            <person name="Nemesh J."/>
            <person name="Ziaugra L."/>
            <person name="Friedland L."/>
            <person name="Rolfe A."/>
            <person name="Warrington J."/>
            <person name="Lipshutz R."/>
            <person name="Daley G.Q."/>
            <person name="Lander E.S."/>
        </authorList>
    </citation>
    <scope>VARIANTS ARG-191 AND VAL-410</scope>
</reference>
<reference key="66">
    <citation type="journal article" date="1999" name="Nat. Genet.">
        <authorList>
            <person name="Cargill M."/>
            <person name="Altshuler D."/>
            <person name="Ireland J."/>
            <person name="Sklar P."/>
            <person name="Ardlie K."/>
            <person name="Patil N."/>
            <person name="Shaw N."/>
            <person name="Lane C.R."/>
            <person name="Lim E.P."/>
            <person name="Kalyanaraman N."/>
            <person name="Nemesh J."/>
            <person name="Ziaugra L."/>
            <person name="Friedland L."/>
            <person name="Rolfe A."/>
            <person name="Warrington J."/>
            <person name="Lipshutz R."/>
            <person name="Daley G.Q."/>
            <person name="Lander E.S."/>
        </authorList>
    </citation>
    <scope>ERRATUM OF PUBMED:10391209</scope>
</reference>
<reference key="67">
    <citation type="journal article" date="2002" name="Blood">
        <title>Fibrinogen Hillsborough: a novel gamma-gly309asp dysfibrinogen with impaired clotting.</title>
        <authorList>
            <person name="Mullin J.L."/>
            <person name="Brennan S.O."/>
            <person name="Ganly P.S."/>
            <person name="George P.M."/>
        </authorList>
    </citation>
    <scope>VARIANT HILLSBOROUGH ASP-335</scope>
</reference>
<reference key="68">
    <citation type="journal article" date="2005" name="Blood">
        <title>Fibrinogen Philadelphia, a hypodysfibrinogenemia characterized by abnormal polymerization and fibrinogen hypercatabolism due to gamma S378P mutation.</title>
        <authorList>
            <person name="Keller M.A."/>
            <person name="Martinez J."/>
            <person name="Baradet T.C."/>
            <person name="Nagaswami C."/>
            <person name="Chernysh I.N."/>
            <person name="Borowski M.K."/>
            <person name="Surrey S."/>
            <person name="Weisel J.W."/>
        </authorList>
    </citation>
    <scope>VARIANT DYSFIBRIN PRO-404</scope>
</reference>
<reference key="69">
    <citation type="journal article" date="2015" name="Thromb. Haemost.">
        <title>Clinical and molecular characterisation of 21 patients affected by quantitative fibrinogen deficiency.</title>
        <authorList>
            <person name="Asselta R."/>
            <person name="Plate M."/>
            <person name="Robusto M."/>
            <person name="Borhany M."/>
            <person name="Guella I."/>
            <person name="Solda G."/>
            <person name="Afrasiabi A."/>
            <person name="Menegatti M."/>
            <person name="Shamsi T."/>
            <person name="Peyvandi F."/>
            <person name="Duga S."/>
        </authorList>
    </citation>
    <scope>INVOLVEMENT IN CAFBN; VARIANTS CAFBN PRO-303; HIS-327; ASP-345 AND TRP-401</scope>
    <scope>CHARACTERIZATION OF VARIANTS CAFBN PRO-303; HIS-327 AND ASP-345</scope>
</reference>
<dbReference type="EMBL" id="M10014">
    <property type="protein sequence ID" value="AAB59530.1"/>
    <property type="molecule type" value="Genomic_DNA"/>
</dbReference>
<dbReference type="EMBL" id="M10014">
    <property type="protein sequence ID" value="AAB59531.1"/>
    <property type="molecule type" value="Genomic_DNA"/>
</dbReference>
<dbReference type="EMBL" id="AF118092">
    <property type="protein sequence ID" value="AAF22036.1"/>
    <property type="molecule type" value="mRNA"/>
</dbReference>
<dbReference type="EMBL" id="AF350254">
    <property type="protein sequence ID" value="AAK19751.2"/>
    <property type="molecule type" value="Genomic_DNA"/>
</dbReference>
<dbReference type="EMBL" id="AF350254">
    <property type="protein sequence ID" value="AAK19752.2"/>
    <property type="molecule type" value="Genomic_DNA"/>
</dbReference>
<dbReference type="EMBL" id="AK289422">
    <property type="protein sequence ID" value="BAF82111.1"/>
    <property type="molecule type" value="mRNA"/>
</dbReference>
<dbReference type="EMBL" id="AK290824">
    <property type="protein sequence ID" value="BAF83513.1"/>
    <property type="molecule type" value="mRNA"/>
</dbReference>
<dbReference type="EMBL" id="BT007081">
    <property type="protein sequence ID" value="AAP35744.1"/>
    <property type="molecule type" value="mRNA"/>
</dbReference>
<dbReference type="EMBL" id="CH471056">
    <property type="protein sequence ID" value="EAX04917.1"/>
    <property type="molecule type" value="Genomic_DNA"/>
</dbReference>
<dbReference type="EMBL" id="CH471056">
    <property type="protein sequence ID" value="EAX04919.1"/>
    <property type="molecule type" value="Genomic_DNA"/>
</dbReference>
<dbReference type="EMBL" id="BC007044">
    <property type="protein sequence ID" value="AAH07044.1"/>
    <property type="molecule type" value="mRNA"/>
</dbReference>
<dbReference type="EMBL" id="BC021674">
    <property type="protein sequence ID" value="AAH21674.1"/>
    <property type="molecule type" value="mRNA"/>
</dbReference>
<dbReference type="EMBL" id="X51473">
    <property type="protein sequence ID" value="CAA35837.1"/>
    <property type="molecule type" value="mRNA"/>
</dbReference>
<dbReference type="EMBL" id="X00086">
    <property type="protein sequence ID" value="CAA24944.1"/>
    <property type="molecule type" value="mRNA"/>
</dbReference>
<dbReference type="EMBL" id="K02569">
    <property type="protein sequence ID" value="AAA52430.1"/>
    <property type="molecule type" value="Genomic_DNA"/>
</dbReference>
<dbReference type="EMBL" id="K02569">
    <property type="protein sequence ID" value="AAA52431.1"/>
    <property type="molecule type" value="Genomic_DNA"/>
</dbReference>
<dbReference type="CCDS" id="CCDS3788.1">
    <molecule id="P02679-1"/>
</dbReference>
<dbReference type="CCDS" id="CCDS47153.1">
    <molecule id="P02679-2"/>
</dbReference>
<dbReference type="PIR" id="A90470">
    <property type="entry name" value="FGHUG"/>
</dbReference>
<dbReference type="PIR" id="A90494">
    <property type="entry name" value="FGHUGB"/>
</dbReference>
<dbReference type="RefSeq" id="NP_000500.2">
    <molecule id="P02679-2"/>
    <property type="nucleotide sequence ID" value="NM_000509.6"/>
</dbReference>
<dbReference type="RefSeq" id="NP_068656.2">
    <molecule id="P02679-1"/>
    <property type="nucleotide sequence ID" value="NM_021870.3"/>
</dbReference>
<dbReference type="PDB" id="1DUG">
    <property type="method" value="X-ray"/>
    <property type="resolution" value="1.80 A"/>
    <property type="chains" value="A/B=424-433"/>
</dbReference>
<dbReference type="PDB" id="1FIB">
    <property type="method" value="X-ray"/>
    <property type="resolution" value="2.10 A"/>
    <property type="chains" value="A=169-433"/>
</dbReference>
<dbReference type="PDB" id="1FIC">
    <property type="method" value="X-ray"/>
    <property type="resolution" value="2.50 A"/>
    <property type="chains" value="A/B=169-433"/>
</dbReference>
<dbReference type="PDB" id="1FID">
    <property type="method" value="X-ray"/>
    <property type="resolution" value="2.10 A"/>
    <property type="chains" value="A=169-433"/>
</dbReference>
<dbReference type="PDB" id="1FZA">
    <property type="method" value="X-ray"/>
    <property type="resolution" value="2.90 A"/>
    <property type="chains" value="C/F=114-432"/>
</dbReference>
<dbReference type="PDB" id="1FZB">
    <property type="method" value="X-ray"/>
    <property type="resolution" value="2.90 A"/>
    <property type="chains" value="C/F=114-432"/>
</dbReference>
<dbReference type="PDB" id="1FZC">
    <property type="method" value="X-ray"/>
    <property type="resolution" value="2.30 A"/>
    <property type="chains" value="C/F=114-432"/>
</dbReference>
<dbReference type="PDB" id="1FZE">
    <property type="method" value="X-ray"/>
    <property type="resolution" value="3.00 A"/>
    <property type="chains" value="C/F=114-432"/>
</dbReference>
<dbReference type="PDB" id="1FZF">
    <property type="method" value="X-ray"/>
    <property type="resolution" value="2.70 A"/>
    <property type="chains" value="C/F=114-432"/>
</dbReference>
<dbReference type="PDB" id="1FZG">
    <property type="method" value="X-ray"/>
    <property type="resolution" value="2.50 A"/>
    <property type="chains" value="C/F=114-432"/>
</dbReference>
<dbReference type="PDB" id="1LT9">
    <property type="method" value="X-ray"/>
    <property type="resolution" value="2.80 A"/>
    <property type="chains" value="C/F=122-432"/>
</dbReference>
<dbReference type="PDB" id="1LTJ">
    <property type="method" value="X-ray"/>
    <property type="resolution" value="2.80 A"/>
    <property type="chains" value="C/F=122-432"/>
</dbReference>
<dbReference type="PDB" id="1N86">
    <property type="method" value="X-ray"/>
    <property type="resolution" value="3.20 A"/>
    <property type="chains" value="C/F=114-433"/>
</dbReference>
<dbReference type="PDB" id="1N8E">
    <property type="method" value="X-ray"/>
    <property type="resolution" value="4.50 A"/>
    <property type="chains" value="C/F=114-433"/>
</dbReference>
<dbReference type="PDB" id="1RE3">
    <property type="method" value="X-ray"/>
    <property type="resolution" value="2.45 A"/>
    <property type="chains" value="C/F=122-432"/>
</dbReference>
<dbReference type="PDB" id="1RE4">
    <property type="method" value="X-ray"/>
    <property type="resolution" value="2.70 A"/>
    <property type="chains" value="C/F=122-432"/>
</dbReference>
<dbReference type="PDB" id="1RF0">
    <property type="method" value="X-ray"/>
    <property type="resolution" value="2.81 A"/>
    <property type="chains" value="C/F=122-432"/>
</dbReference>
<dbReference type="PDB" id="1RF1">
    <property type="method" value="X-ray"/>
    <property type="resolution" value="2.53 A"/>
    <property type="chains" value="C/F=122-432"/>
</dbReference>
<dbReference type="PDB" id="2A45">
    <property type="method" value="X-ray"/>
    <property type="resolution" value="3.65 A"/>
    <property type="chains" value="I/L=27-71"/>
</dbReference>
<dbReference type="PDB" id="2FFD">
    <property type="method" value="X-ray"/>
    <property type="resolution" value="2.89 A"/>
    <property type="chains" value="C/F=122-432"/>
</dbReference>
<dbReference type="PDB" id="2FIB">
    <property type="method" value="X-ray"/>
    <property type="resolution" value="2.01 A"/>
    <property type="chains" value="A=169-433"/>
</dbReference>
<dbReference type="PDB" id="2H43">
    <property type="method" value="X-ray"/>
    <property type="resolution" value="2.70 A"/>
    <property type="chains" value="C/F=115-433"/>
</dbReference>
<dbReference type="PDB" id="2HLO">
    <property type="method" value="X-ray"/>
    <property type="resolution" value="2.60 A"/>
    <property type="chains" value="C/F=114-433"/>
</dbReference>
<dbReference type="PDB" id="2HOD">
    <property type="method" value="X-ray"/>
    <property type="resolution" value="2.90 A"/>
    <property type="chains" value="C/F/I/L=115-433"/>
</dbReference>
<dbReference type="PDB" id="2HPC">
    <property type="method" value="X-ray"/>
    <property type="resolution" value="2.90 A"/>
    <property type="chains" value="C/F/I/L=115-433"/>
</dbReference>
<dbReference type="PDB" id="2HWL">
    <property type="method" value="X-ray"/>
    <property type="resolution" value="2.40 A"/>
    <property type="chains" value="P=439-452"/>
</dbReference>
<dbReference type="PDB" id="2OYH">
    <property type="method" value="X-ray"/>
    <property type="resolution" value="2.40 A"/>
    <property type="chains" value="C/F=122-432"/>
</dbReference>
<dbReference type="PDB" id="2OYI">
    <property type="method" value="X-ray"/>
    <property type="resolution" value="2.70 A"/>
    <property type="chains" value="C/F=122-432"/>
</dbReference>
<dbReference type="PDB" id="2Q9I">
    <property type="method" value="X-ray"/>
    <property type="resolution" value="2.80 A"/>
    <property type="chains" value="C/F=114-433"/>
</dbReference>
<dbReference type="PDB" id="2VDO">
    <property type="method" value="X-ray"/>
    <property type="resolution" value="2.51 A"/>
    <property type="chains" value="C=426-433"/>
</dbReference>
<dbReference type="PDB" id="2VDP">
    <property type="method" value="X-ray"/>
    <property type="resolution" value="2.80 A"/>
    <property type="chains" value="C=428-433"/>
</dbReference>
<dbReference type="PDB" id="2VDQ">
    <property type="method" value="X-ray"/>
    <property type="resolution" value="2.59 A"/>
    <property type="chains" value="C=426-433"/>
</dbReference>
<dbReference type="PDB" id="2VDR">
    <property type="method" value="X-ray"/>
    <property type="resolution" value="2.40 A"/>
    <property type="chains" value="C=428-433"/>
</dbReference>
<dbReference type="PDB" id="2VR3">
    <property type="method" value="X-ray"/>
    <property type="resolution" value="1.95 A"/>
    <property type="chains" value="C/D=425-433"/>
</dbReference>
<dbReference type="PDB" id="2XNX">
    <property type="method" value="X-ray"/>
    <property type="resolution" value="3.30 A"/>
    <property type="chains" value="C/F/I/L=114-432"/>
</dbReference>
<dbReference type="PDB" id="2XNY">
    <property type="method" value="X-ray"/>
    <property type="resolution" value="7.50 A"/>
    <property type="chains" value="C/F=114-432"/>
</dbReference>
<dbReference type="PDB" id="2Y7L">
    <property type="method" value="X-ray"/>
    <property type="resolution" value="1.49 A"/>
    <property type="chains" value="B=421-433"/>
</dbReference>
<dbReference type="PDB" id="2Z4E">
    <property type="method" value="X-ray"/>
    <property type="resolution" value="2.70 A"/>
    <property type="chains" value="C/F=114-433"/>
</dbReference>
<dbReference type="PDB" id="3BVH">
    <property type="method" value="X-ray"/>
    <property type="resolution" value="2.60 A"/>
    <property type="chains" value="C/F=128-420"/>
</dbReference>
<dbReference type="PDB" id="3E1I">
    <property type="method" value="X-ray"/>
    <property type="resolution" value="2.30 A"/>
    <property type="chains" value="C/F=114-432"/>
</dbReference>
<dbReference type="PDB" id="3FIB">
    <property type="method" value="X-ray"/>
    <property type="resolution" value="2.10 A"/>
    <property type="chains" value="A=170-418"/>
</dbReference>
<dbReference type="PDB" id="3GHG">
    <property type="method" value="X-ray"/>
    <property type="resolution" value="2.90 A"/>
    <property type="chains" value="C/F/I/L=27-433"/>
</dbReference>
<dbReference type="PDB" id="3H32">
    <property type="method" value="X-ray"/>
    <property type="resolution" value="3.60 A"/>
    <property type="chains" value="C/F=121-433"/>
</dbReference>
<dbReference type="PDB" id="3HUS">
    <property type="method" value="X-ray"/>
    <property type="resolution" value="3.04 A"/>
    <property type="chains" value="C/F=122-432"/>
</dbReference>
<dbReference type="PDB" id="4B60">
    <property type="method" value="X-ray"/>
    <property type="resolution" value="1.83 A"/>
    <property type="chains" value="C/D=421-433"/>
</dbReference>
<dbReference type="PDBsum" id="1DUG"/>
<dbReference type="PDBsum" id="1FIB"/>
<dbReference type="PDBsum" id="1FIC"/>
<dbReference type="PDBsum" id="1FID"/>
<dbReference type="PDBsum" id="1FZA"/>
<dbReference type="PDBsum" id="1FZB"/>
<dbReference type="PDBsum" id="1FZC"/>
<dbReference type="PDBsum" id="1FZE"/>
<dbReference type="PDBsum" id="1FZF"/>
<dbReference type="PDBsum" id="1FZG"/>
<dbReference type="PDBsum" id="1LT9"/>
<dbReference type="PDBsum" id="1LTJ"/>
<dbReference type="PDBsum" id="1N86"/>
<dbReference type="PDBsum" id="1N8E"/>
<dbReference type="PDBsum" id="1RE3"/>
<dbReference type="PDBsum" id="1RE4"/>
<dbReference type="PDBsum" id="1RF0"/>
<dbReference type="PDBsum" id="1RF1"/>
<dbReference type="PDBsum" id="2A45"/>
<dbReference type="PDBsum" id="2FFD"/>
<dbReference type="PDBsum" id="2FIB"/>
<dbReference type="PDBsum" id="2H43"/>
<dbReference type="PDBsum" id="2HLO"/>
<dbReference type="PDBsum" id="2HOD"/>
<dbReference type="PDBsum" id="2HPC"/>
<dbReference type="PDBsum" id="2HWL"/>
<dbReference type="PDBsum" id="2OYH"/>
<dbReference type="PDBsum" id="2OYI"/>
<dbReference type="PDBsum" id="2Q9I"/>
<dbReference type="PDBsum" id="2VDO"/>
<dbReference type="PDBsum" id="2VDP"/>
<dbReference type="PDBsum" id="2VDQ"/>
<dbReference type="PDBsum" id="2VDR"/>
<dbReference type="PDBsum" id="2VR3"/>
<dbReference type="PDBsum" id="2XNX"/>
<dbReference type="PDBsum" id="2XNY"/>
<dbReference type="PDBsum" id="2Y7L"/>
<dbReference type="PDBsum" id="2Z4E"/>
<dbReference type="PDBsum" id="3BVH"/>
<dbReference type="PDBsum" id="3E1I"/>
<dbReference type="PDBsum" id="3FIB"/>
<dbReference type="PDBsum" id="3GHG"/>
<dbReference type="PDBsum" id="3H32"/>
<dbReference type="PDBsum" id="3HUS"/>
<dbReference type="PDBsum" id="4B60"/>
<dbReference type="BMRB" id="P02679"/>
<dbReference type="SMR" id="P02679"/>
<dbReference type="BioGRID" id="108557">
    <property type="interactions" value="132"/>
</dbReference>
<dbReference type="ComplexPortal" id="CPX-1922">
    <property type="entry name" value="Fibrinogen complex"/>
</dbReference>
<dbReference type="ComplexPortal" id="CPX-6225">
    <property type="entry name" value="Fibrin complex"/>
</dbReference>
<dbReference type="CORUM" id="P02679"/>
<dbReference type="DIP" id="DIP-29644N"/>
<dbReference type="FunCoup" id="P02679">
    <property type="interactions" value="174"/>
</dbReference>
<dbReference type="IntAct" id="P02679">
    <property type="interactions" value="84"/>
</dbReference>
<dbReference type="MINT" id="P02679"/>
<dbReference type="STRING" id="9606.ENSP00000336829"/>
<dbReference type="ChEMBL" id="CHEMBL2364709"/>
<dbReference type="DrugBank" id="DB00009">
    <property type="generic name" value="Alteplase"/>
</dbReference>
<dbReference type="DrugBank" id="DB11571">
    <property type="generic name" value="Human thrombin"/>
</dbReference>
<dbReference type="DrugBank" id="DB00364">
    <property type="generic name" value="Sucralfate"/>
</dbReference>
<dbReference type="DrugBank" id="DB11300">
    <property type="generic name" value="Thrombin"/>
</dbReference>
<dbReference type="DrugBank" id="DB11572">
    <property type="generic name" value="Thrombin alfa"/>
</dbReference>
<dbReference type="UniLectin" id="P02679"/>
<dbReference type="CarbonylDB" id="P02679"/>
<dbReference type="GlyConnect" id="157">
    <property type="glycosylation" value="4 N-Linked glycans"/>
</dbReference>
<dbReference type="GlyConnect" id="160">
    <property type="glycosylation" value="13 N-Linked glycans (1 site), 1 O-Linked glycan (1 site)"/>
</dbReference>
<dbReference type="GlyCosmos" id="P02679">
    <property type="glycosylation" value="2 sites, 14 glycans"/>
</dbReference>
<dbReference type="GlyGen" id="P02679">
    <property type="glycosylation" value="4 sites, 105 N-linked glycans (2 sites), 1 O-linked glycan (1 site)"/>
</dbReference>
<dbReference type="iPTMnet" id="P02679"/>
<dbReference type="PhosphoSitePlus" id="P02679"/>
<dbReference type="BioMuta" id="FGG"/>
<dbReference type="DMDM" id="20178280"/>
<dbReference type="OGP" id="P02679"/>
<dbReference type="REPRODUCTION-2DPAGE" id="IPI00219713"/>
<dbReference type="REPRODUCTION-2DPAGE" id="P02679"/>
<dbReference type="CPTAC" id="non-CPTAC-1121"/>
<dbReference type="jPOST" id="P02679"/>
<dbReference type="MassIVE" id="P02679"/>
<dbReference type="PaxDb" id="9606-ENSP00000336829"/>
<dbReference type="PeptideAtlas" id="P02679"/>
<dbReference type="PRIDE" id="P02679"/>
<dbReference type="ProteomicsDB" id="51545">
    <molecule id="P02679-1"/>
</dbReference>
<dbReference type="ProteomicsDB" id="51546">
    <molecule id="P02679-2"/>
</dbReference>
<dbReference type="Pumba" id="P02679"/>
<dbReference type="ABCD" id="P02679">
    <property type="antibodies" value="9 sequenced antibodies"/>
</dbReference>
<dbReference type="Antibodypedia" id="16774">
    <property type="antibodies" value="751 antibodies from 37 providers"/>
</dbReference>
<dbReference type="DNASU" id="2266"/>
<dbReference type="Ensembl" id="ENST00000336098.8">
    <molecule id="P02679-1"/>
    <property type="protein sequence ID" value="ENSP00000336829.3"/>
    <property type="gene ID" value="ENSG00000171557.17"/>
</dbReference>
<dbReference type="Ensembl" id="ENST00000404648.7">
    <molecule id="P02679-2"/>
    <property type="protein sequence ID" value="ENSP00000384860.3"/>
    <property type="gene ID" value="ENSG00000171557.17"/>
</dbReference>
<dbReference type="GeneID" id="2266"/>
<dbReference type="KEGG" id="hsa:2266"/>
<dbReference type="MANE-Select" id="ENST00000336098.8">
    <property type="protein sequence ID" value="ENSP00000336829.3"/>
    <property type="RefSeq nucleotide sequence ID" value="NM_021870.3"/>
    <property type="RefSeq protein sequence ID" value="NP_068656.2"/>
</dbReference>
<dbReference type="UCSC" id="uc003iog.4">
    <molecule id="P02679-1"/>
    <property type="organism name" value="human"/>
</dbReference>
<dbReference type="AGR" id="HGNC:3694"/>
<dbReference type="CTD" id="2266"/>
<dbReference type="DisGeNET" id="2266"/>
<dbReference type="GeneCards" id="FGG"/>
<dbReference type="HGNC" id="HGNC:3694">
    <property type="gene designation" value="FGG"/>
</dbReference>
<dbReference type="HPA" id="ENSG00000171557">
    <property type="expression patterns" value="Tissue enriched (liver)"/>
</dbReference>
<dbReference type="MalaCards" id="FGG"/>
<dbReference type="MIM" id="134850">
    <property type="type" value="gene"/>
</dbReference>
<dbReference type="MIM" id="202400">
    <property type="type" value="phenotype"/>
</dbReference>
<dbReference type="MIM" id="616004">
    <property type="type" value="phenotype"/>
</dbReference>
<dbReference type="neXtProt" id="NX_P02679"/>
<dbReference type="OpenTargets" id="ENSG00000171557"/>
<dbReference type="Orphanet" id="98880">
    <property type="disease" value="Familial afibrinogenemia"/>
</dbReference>
<dbReference type="Orphanet" id="98881">
    <property type="disease" value="Familial dysfibrinogenemia"/>
</dbReference>
<dbReference type="Orphanet" id="248408">
    <property type="disease" value="Familial hypodysfibrinogenemia"/>
</dbReference>
<dbReference type="Orphanet" id="101041">
    <property type="disease" value="Familial hypofibrinogenemia"/>
</dbReference>
<dbReference type="PharmGKB" id="PA430"/>
<dbReference type="VEuPathDB" id="HostDB:ENSG00000171557"/>
<dbReference type="eggNOG" id="KOG2579">
    <property type="taxonomic scope" value="Eukaryota"/>
</dbReference>
<dbReference type="GeneTree" id="ENSGT00940000158467"/>
<dbReference type="HOGENOM" id="CLU_038628_13_0_1"/>
<dbReference type="InParanoid" id="P02679"/>
<dbReference type="OMA" id="TYHNGMR"/>
<dbReference type="OrthoDB" id="10063010at2759"/>
<dbReference type="PAN-GO" id="P02679">
    <property type="GO annotations" value="6 GO annotations based on evolutionary models"/>
</dbReference>
<dbReference type="PhylomeDB" id="P02679"/>
<dbReference type="TreeFam" id="TF336658"/>
<dbReference type="BioCyc" id="MetaCyc:ENSG00000171557-MONOMER"/>
<dbReference type="PathwayCommons" id="P02679"/>
<dbReference type="Reactome" id="R-HSA-114608">
    <property type="pathway name" value="Platelet degranulation"/>
</dbReference>
<dbReference type="Reactome" id="R-HSA-1236974">
    <property type="pathway name" value="ER-Phagosome pathway"/>
</dbReference>
<dbReference type="Reactome" id="R-HSA-140875">
    <property type="pathway name" value="Common Pathway of Fibrin Clot Formation"/>
</dbReference>
<dbReference type="Reactome" id="R-HSA-166058">
    <property type="pathway name" value="MyD88:MAL(TIRAP) cascade initiated on plasma membrane"/>
</dbReference>
<dbReference type="Reactome" id="R-HSA-216083">
    <property type="pathway name" value="Integrin cell surface interactions"/>
</dbReference>
<dbReference type="Reactome" id="R-HSA-354192">
    <property type="pathway name" value="Integrin signaling"/>
</dbReference>
<dbReference type="Reactome" id="R-HSA-354194">
    <property type="pathway name" value="GRB2:SOS provides linkage to MAPK signaling for Integrins"/>
</dbReference>
<dbReference type="Reactome" id="R-HSA-372708">
    <property type="pathway name" value="p130Cas linkage to MAPK signaling for integrins"/>
</dbReference>
<dbReference type="Reactome" id="R-HSA-381426">
    <property type="pathway name" value="Regulation of Insulin-like Growth Factor (IGF) transport and uptake by Insulin-like Growth Factor Binding Proteins (IGFBPs)"/>
</dbReference>
<dbReference type="Reactome" id="R-HSA-5602498">
    <property type="pathway name" value="MyD88 deficiency (TLR2/4)"/>
</dbReference>
<dbReference type="Reactome" id="R-HSA-5603041">
    <property type="pathway name" value="IRAK4 deficiency (TLR2/4)"/>
</dbReference>
<dbReference type="Reactome" id="R-HSA-5674135">
    <property type="pathway name" value="MAP2K and MAPK activation"/>
</dbReference>
<dbReference type="Reactome" id="R-HSA-5686938">
    <property type="pathway name" value="Regulation of TLR by endogenous ligand"/>
</dbReference>
<dbReference type="Reactome" id="R-HSA-6802946">
    <property type="pathway name" value="Signaling by moderate kinase activity BRAF mutants"/>
</dbReference>
<dbReference type="Reactome" id="R-HSA-6802948">
    <property type="pathway name" value="Signaling by high-kinase activity BRAF mutants"/>
</dbReference>
<dbReference type="Reactome" id="R-HSA-6802952">
    <property type="pathway name" value="Signaling by BRAF and RAF1 fusions"/>
</dbReference>
<dbReference type="Reactome" id="R-HSA-6802955">
    <property type="pathway name" value="Paradoxical activation of RAF signaling by kinase inactive BRAF"/>
</dbReference>
<dbReference type="Reactome" id="R-HSA-8957275">
    <property type="pathway name" value="Post-translational protein phosphorylation"/>
</dbReference>
<dbReference type="Reactome" id="R-HSA-9649948">
    <property type="pathway name" value="Signaling downstream of RAS mutants"/>
</dbReference>
<dbReference type="Reactome" id="R-HSA-9656223">
    <property type="pathway name" value="Signaling by RAF1 mutants"/>
</dbReference>
<dbReference type="SignaLink" id="P02679"/>
<dbReference type="SIGNOR" id="P02679"/>
<dbReference type="BioGRID-ORCS" id="2266">
    <property type="hits" value="23 hits in 1144 CRISPR screens"/>
</dbReference>
<dbReference type="CD-CODE" id="FB4E32DD">
    <property type="entry name" value="Presynaptic clusters and postsynaptic densities"/>
</dbReference>
<dbReference type="ChiTaRS" id="FGG">
    <property type="organism name" value="human"/>
</dbReference>
<dbReference type="EvolutionaryTrace" id="P02679"/>
<dbReference type="GeneWiki" id="FGG"/>
<dbReference type="GenomeRNAi" id="2266"/>
<dbReference type="Pharos" id="P02679">
    <property type="development level" value="Tbio"/>
</dbReference>
<dbReference type="PRO" id="PR:P02679"/>
<dbReference type="Proteomes" id="UP000005640">
    <property type="component" value="Chromosome 4"/>
</dbReference>
<dbReference type="RNAct" id="P02679">
    <property type="molecule type" value="protein"/>
</dbReference>
<dbReference type="Bgee" id="ENSG00000171557">
    <property type="expression patterns" value="Expressed in right lobe of liver and 99 other cell types or tissues"/>
</dbReference>
<dbReference type="ExpressionAtlas" id="P02679">
    <property type="expression patterns" value="baseline and differential"/>
</dbReference>
<dbReference type="GO" id="GO:0072562">
    <property type="term" value="C:blood microparticle"/>
    <property type="evidence" value="ECO:0007005"/>
    <property type="project" value="UniProtKB"/>
</dbReference>
<dbReference type="GO" id="GO:0009986">
    <property type="term" value="C:cell surface"/>
    <property type="evidence" value="ECO:0000314"/>
    <property type="project" value="BHF-UCL"/>
</dbReference>
<dbReference type="GO" id="GO:0062023">
    <property type="term" value="C:collagen-containing extracellular matrix"/>
    <property type="evidence" value="ECO:0007005"/>
    <property type="project" value="BHF-UCL"/>
</dbReference>
<dbReference type="GO" id="GO:0005788">
    <property type="term" value="C:endoplasmic reticulum lumen"/>
    <property type="evidence" value="ECO:0000304"/>
    <property type="project" value="Reactome"/>
</dbReference>
<dbReference type="GO" id="GO:0009897">
    <property type="term" value="C:external side of plasma membrane"/>
    <property type="evidence" value="ECO:0000314"/>
    <property type="project" value="BHF-UCL"/>
</dbReference>
<dbReference type="GO" id="GO:0070062">
    <property type="term" value="C:extracellular exosome"/>
    <property type="evidence" value="ECO:0007005"/>
    <property type="project" value="UniProtKB"/>
</dbReference>
<dbReference type="GO" id="GO:0005576">
    <property type="term" value="C:extracellular region"/>
    <property type="evidence" value="ECO:0000304"/>
    <property type="project" value="Reactome"/>
</dbReference>
<dbReference type="GO" id="GO:0005615">
    <property type="term" value="C:extracellular space"/>
    <property type="evidence" value="ECO:0000314"/>
    <property type="project" value="BHF-UCL"/>
</dbReference>
<dbReference type="GO" id="GO:0005577">
    <property type="term" value="C:fibrinogen complex"/>
    <property type="evidence" value="ECO:0000314"/>
    <property type="project" value="UniProtKB"/>
</dbReference>
<dbReference type="GO" id="GO:0005886">
    <property type="term" value="C:plasma membrane"/>
    <property type="evidence" value="ECO:0000304"/>
    <property type="project" value="Reactome"/>
</dbReference>
<dbReference type="GO" id="GO:0031091">
    <property type="term" value="C:platelet alpha granule"/>
    <property type="evidence" value="ECO:0000314"/>
    <property type="project" value="BHF-UCL"/>
</dbReference>
<dbReference type="GO" id="GO:0031093">
    <property type="term" value="C:platelet alpha granule lumen"/>
    <property type="evidence" value="ECO:0000304"/>
    <property type="project" value="Reactome"/>
</dbReference>
<dbReference type="GO" id="GO:0050839">
    <property type="term" value="F:cell adhesion molecule binding"/>
    <property type="evidence" value="ECO:0000353"/>
    <property type="project" value="BHF-UCL"/>
</dbReference>
<dbReference type="GO" id="GO:0005201">
    <property type="term" value="F:extracellular matrix structural constituent"/>
    <property type="evidence" value="ECO:0007005"/>
    <property type="project" value="BHF-UCL"/>
</dbReference>
<dbReference type="GO" id="GO:0046872">
    <property type="term" value="F:metal ion binding"/>
    <property type="evidence" value="ECO:0007669"/>
    <property type="project" value="UniProtKB-KW"/>
</dbReference>
<dbReference type="GO" id="GO:0005102">
    <property type="term" value="F:signaling receptor binding"/>
    <property type="evidence" value="ECO:0000353"/>
    <property type="project" value="BHF-UCL"/>
</dbReference>
<dbReference type="GO" id="GO:0005198">
    <property type="term" value="F:structural molecule activity"/>
    <property type="evidence" value="ECO:0000314"/>
    <property type="project" value="BHF-UCL"/>
</dbReference>
<dbReference type="GO" id="GO:0072378">
    <property type="term" value="P:blood coagulation, fibrin clot formation"/>
    <property type="evidence" value="ECO:0000314"/>
    <property type="project" value="UniProtKB"/>
</dbReference>
<dbReference type="GO" id="GO:0007160">
    <property type="term" value="P:cell-matrix adhesion"/>
    <property type="evidence" value="ECO:0000314"/>
    <property type="project" value="BHF-UCL"/>
</dbReference>
<dbReference type="GO" id="GO:0042730">
    <property type="term" value="P:fibrinolysis"/>
    <property type="evidence" value="ECO:0000314"/>
    <property type="project" value="UniProtKB"/>
</dbReference>
<dbReference type="GO" id="GO:2000352">
    <property type="term" value="P:negative regulation of endothelial cell apoptotic process"/>
    <property type="evidence" value="ECO:0000314"/>
    <property type="project" value="BHF-UCL"/>
</dbReference>
<dbReference type="GO" id="GO:1902042">
    <property type="term" value="P:negative regulation of extrinsic apoptotic signaling pathway via death domain receptors"/>
    <property type="evidence" value="ECO:0000314"/>
    <property type="project" value="BHF-UCL"/>
</dbReference>
<dbReference type="GO" id="GO:0031639">
    <property type="term" value="P:plasminogen activation"/>
    <property type="evidence" value="ECO:0000314"/>
    <property type="project" value="UniProtKB"/>
</dbReference>
<dbReference type="GO" id="GO:0070527">
    <property type="term" value="P:platelet aggregation"/>
    <property type="evidence" value="ECO:0000314"/>
    <property type="project" value="BHF-UCL"/>
</dbReference>
<dbReference type="GO" id="GO:0070374">
    <property type="term" value="P:positive regulation of ERK1 and ERK2 cascade"/>
    <property type="evidence" value="ECO:0000314"/>
    <property type="project" value="BHF-UCL"/>
</dbReference>
<dbReference type="GO" id="GO:0045921">
    <property type="term" value="P:positive regulation of exocytosis"/>
    <property type="evidence" value="ECO:0000314"/>
    <property type="project" value="BHF-UCL"/>
</dbReference>
<dbReference type="GO" id="GO:0034116">
    <property type="term" value="P:positive regulation of heterotypic cell-cell adhesion"/>
    <property type="evidence" value="ECO:0000314"/>
    <property type="project" value="BHF-UCL"/>
</dbReference>
<dbReference type="GO" id="GO:0090277">
    <property type="term" value="P:positive regulation of peptide hormone secretion"/>
    <property type="evidence" value="ECO:0000314"/>
    <property type="project" value="BHF-UCL"/>
</dbReference>
<dbReference type="GO" id="GO:0050714">
    <property type="term" value="P:positive regulation of protein secretion"/>
    <property type="evidence" value="ECO:0000314"/>
    <property type="project" value="BHF-UCL"/>
</dbReference>
<dbReference type="GO" id="GO:1900026">
    <property type="term" value="P:positive regulation of substrate adhesion-dependent cell spreading"/>
    <property type="evidence" value="ECO:0000303"/>
    <property type="project" value="BHF-UCL"/>
</dbReference>
<dbReference type="GO" id="GO:0045907">
    <property type="term" value="P:positive regulation of vasoconstriction"/>
    <property type="evidence" value="ECO:0000314"/>
    <property type="project" value="BHF-UCL"/>
</dbReference>
<dbReference type="GO" id="GO:0051258">
    <property type="term" value="P:protein polymerization"/>
    <property type="evidence" value="ECO:0000315"/>
    <property type="project" value="BHF-UCL"/>
</dbReference>
<dbReference type="GO" id="GO:0009306">
    <property type="term" value="P:protein secretion"/>
    <property type="evidence" value="ECO:0000315"/>
    <property type="project" value="UniProtKB"/>
</dbReference>
<dbReference type="GO" id="GO:0065003">
    <property type="term" value="P:protein-containing complex assembly"/>
    <property type="evidence" value="ECO:0000314"/>
    <property type="project" value="BHF-UCL"/>
</dbReference>
<dbReference type="GO" id="GO:0051592">
    <property type="term" value="P:response to calcium ion"/>
    <property type="evidence" value="ECO:0000314"/>
    <property type="project" value="BHF-UCL"/>
</dbReference>
<dbReference type="CDD" id="cd00087">
    <property type="entry name" value="FReD"/>
    <property type="match status" value="1"/>
</dbReference>
<dbReference type="FunFam" id="1.20.5.50:FF:000005">
    <property type="entry name" value="Fibrinogen gamma chain"/>
    <property type="match status" value="1"/>
</dbReference>
<dbReference type="FunFam" id="3.90.215.10:FF:000002">
    <property type="entry name" value="Fibrinogen gamma chain"/>
    <property type="match status" value="1"/>
</dbReference>
<dbReference type="FunFam" id="4.10.530.10:FF:000002">
    <property type="entry name" value="Fibrinogen gamma chain"/>
    <property type="match status" value="1"/>
</dbReference>
<dbReference type="Gene3D" id="1.20.5.50">
    <property type="match status" value="2"/>
</dbReference>
<dbReference type="Gene3D" id="3.90.215.10">
    <property type="entry name" value="Gamma Fibrinogen, chain A, domain 1"/>
    <property type="match status" value="1"/>
</dbReference>
<dbReference type="Gene3D" id="4.10.530.10">
    <property type="entry name" value="Gamma-fibrinogen Carboxyl Terminal Fragment, domain 2"/>
    <property type="match status" value="1"/>
</dbReference>
<dbReference type="InterPro" id="IPR037579">
    <property type="entry name" value="FIB_ANG-like"/>
</dbReference>
<dbReference type="InterPro" id="IPR036056">
    <property type="entry name" value="Fibrinogen-like_C"/>
</dbReference>
<dbReference type="InterPro" id="IPR014716">
    <property type="entry name" value="Fibrinogen_a/b/g_C_1"/>
</dbReference>
<dbReference type="InterPro" id="IPR002181">
    <property type="entry name" value="Fibrinogen_a/b/g_C_dom"/>
</dbReference>
<dbReference type="InterPro" id="IPR012290">
    <property type="entry name" value="Fibrinogen_a/b/g_coil_dom"/>
</dbReference>
<dbReference type="InterPro" id="IPR020837">
    <property type="entry name" value="Fibrinogen_CS"/>
</dbReference>
<dbReference type="PANTHER" id="PTHR47221">
    <property type="entry name" value="FIBRINOGEN ALPHA CHAIN"/>
    <property type="match status" value="1"/>
</dbReference>
<dbReference type="PANTHER" id="PTHR47221:SF6">
    <property type="entry name" value="FIBRINOGEN ALPHA CHAIN"/>
    <property type="match status" value="1"/>
</dbReference>
<dbReference type="Pfam" id="PF08702">
    <property type="entry name" value="Fib_alpha"/>
    <property type="match status" value="1"/>
</dbReference>
<dbReference type="Pfam" id="PF00147">
    <property type="entry name" value="Fibrinogen_C"/>
    <property type="match status" value="1"/>
</dbReference>
<dbReference type="SMART" id="SM00186">
    <property type="entry name" value="FBG"/>
    <property type="match status" value="1"/>
</dbReference>
<dbReference type="SMART" id="SM01212">
    <property type="entry name" value="Fib_alpha"/>
    <property type="match status" value="1"/>
</dbReference>
<dbReference type="SUPFAM" id="SSF56496">
    <property type="entry name" value="Fibrinogen C-terminal domain-like"/>
    <property type="match status" value="1"/>
</dbReference>
<dbReference type="SUPFAM" id="SSF58010">
    <property type="entry name" value="Fibrinogen coiled-coil and central regions"/>
    <property type="match status" value="1"/>
</dbReference>
<dbReference type="PROSITE" id="PS00514">
    <property type="entry name" value="FIBRINOGEN_C_1"/>
    <property type="match status" value="1"/>
</dbReference>
<dbReference type="PROSITE" id="PS51406">
    <property type="entry name" value="FIBRINOGEN_C_2"/>
    <property type="match status" value="1"/>
</dbReference>
<keyword id="KW-0002">3D-structure</keyword>
<keyword id="KW-0025">Alternative splicing</keyword>
<keyword id="KW-0094">Blood coagulation</keyword>
<keyword id="KW-0106">Calcium</keyword>
<keyword id="KW-0175">Coiled coil</keyword>
<keyword id="KW-0903">Direct protein sequencing</keyword>
<keyword id="KW-0225">Disease variant</keyword>
<keyword id="KW-1015">Disulfide bond</keyword>
<keyword id="KW-0325">Glycoprotein</keyword>
<keyword id="KW-0356">Hemostasis</keyword>
<keyword id="KW-1017">Isopeptide bond</keyword>
<keyword id="KW-0479">Metal-binding</keyword>
<keyword id="KW-0597">Phosphoprotein</keyword>
<keyword id="KW-1267">Proteomics identification</keyword>
<keyword id="KW-1185">Reference proteome</keyword>
<keyword id="KW-0964">Secreted</keyword>
<keyword id="KW-0732">Signal</keyword>
<keyword id="KW-0765">Sulfation</keyword>
<proteinExistence type="evidence at protein level"/>
<sequence>MSWSLHPRNLILYFYALLFLSSTCVAYVATRDNCCILDERFGSYCPTTCGIADFLSTYQTKVDKDLQSLEDILHQVENKTSEVKQLIKAIQLTYNPDESSKPNMIDAATLKSRKMLEEIMKYEASILTHDSSIRYLQEIYNSNNQKIVNLKEKVAQLEAQCQEPCKDTVQIHDITGKDCQDIANKGAKQSGLYFIKPLKANQQFLVYCEIDGSGNGWTVFQKRLDGSVDFKKNWIQYKEGFGHLSPTGTTEFWLGNEKIHLISTQSAIPYALRVELEDWNGRTSTADYAMFKVGPEADKYRLTYAYFAGGDAGDAFDGFDFGDDPSDKFFTSHNGMQFSTWDNDNDKFEGNCAEQDGSGWWMNKCHAGHLNGVYYQGGTYSKASTPNGYDNGIIWATWKTRWYSMKKTTMKIIPFNRLTIGEGQQHHLGGAKQVRPEHPAETEYDSLYPEDDL</sequence>
<name>FIBG_HUMAN</name>
<comment type="function">
    <text evidence="1">Together with fibrinogen alpha (FGA) and fibrinogen beta (FGB), polymerizes to form an insoluble fibrin matrix. Has a major function in hemostasis as one of the primary components of blood clots. In addition, functions during the early stages of wound repair to stabilize the lesion and guide cell migration during re-epithelialization. Was originally thought to be essential for platelet aggregation, based on in vitro studies using anticoagulated blood. However, subsequent studies have shown that it is not absolutely required for thrombus formation in vivo. Enhances expression of SELP in activated platelets via an ITGB3-dependent pathway. Maternal fibrinogen is essential for successful pregnancy. Fibrin deposition is also associated with infection, where it protects against IFNG-mediated hemorrhage. May also facilitate the antibacterial immune response via both innate and T-cell mediated pathways.</text>
</comment>
<comment type="subunit">
    <text evidence="4 20 36 43 44 45 46">Heterohexamer; disulfide linked. Contains 2 sets of 3 non-identical chains (alpha, beta and gamma). The 2 heterotrimers are in head to head conformation with the N-termini in a small central domain.</text>
</comment>
<comment type="interaction">
    <interactant intactId="EBI-1034422">
        <id>P02679</id>
    </interactant>
    <interactant intactId="EBI-2259469">
        <id>P75358</id>
        <label>gapA</label>
    </interactant>
    <organismsDiffer>true</organismsDiffer>
    <experiments>2</experiments>
</comment>
<comment type="subcellular location">
    <subcellularLocation>
        <location evidence="4 20 46">Secreted</location>
    </subcellularLocation>
</comment>
<comment type="alternative products">
    <event type="alternative splicing"/>
    <isoform>
        <id>P02679-1</id>
        <name>Gamma-B</name>
        <name>Gamma'</name>
        <sequence type="displayed"/>
    </isoform>
    <isoform>
        <id>P02679-2</id>
        <name>Gamma-A</name>
        <sequence type="described" ref="VSP_001537"/>
    </isoform>
</comment>
<comment type="tissue specificity">
    <text evidence="4 20 46">Detected in blood plasma (at protein level).</text>
</comment>
<comment type="domain">
    <text evidence="20 46">A long coiled coil structure formed by 3 polypeptide chains connects the central nodule to the C-terminal domains (distal nodules). The long C-terminal ends of the alpha chains fold back, contributing a fourth strand to the coiled coil structure.</text>
</comment>
<comment type="PTM">
    <text evidence="22">Conversion of fibrinogen to fibrin is triggered by thrombin, which cleaves fibrinopeptides A and B from alpha and beta chains, and thus exposes the N-terminal polymerization sites responsible for the formation of the soft clot. The soft clot is converted into the hard clot by factor XIIIA which catalyzes the epsilon-(gamma-glutamyl)lysine cross-linking between gamma chains (stronger) and between alpha chains (weaker) of different monomers.</text>
</comment>
<comment type="PTM">
    <text evidence="6 17">Sulfation of C-terminal tyrosines increases affinity for thrombin.</text>
</comment>
<comment type="disease" evidence="26">
    <disease id="DI-01387">
        <name>Congenital afibrinogenemia</name>
        <acronym>CAFBN</acronym>
        <description>Rare autosomal recessive disorder is characterized by bleeding that varies from mild to severe and by complete absence or extremely low levels of plasma and platelet fibrinogen.</description>
        <dbReference type="MIM" id="202400"/>
    </disease>
    <text>The disease is caused by variants affecting the gene represented in this entry. Patients with congenital fibrinogen abnormalities can manifest different clinical pictures. Some cases are clinically silent, some show a tendency toward bleeding and some show a predisposition for thrombosis with or without bleeding.</text>
</comment>
<comment type="disease" evidence="12 23 32 35">
    <disease id="DI-04218">
        <name>Dysfibrinogenemia, congenital</name>
        <acronym>DYSFIBRIN</acronym>
        <description>A disorder characterized by qualitative abnormalities (dysfibrinogenemia) of the circulating fibrinogen. Affected individuals are frequently asymptomatic, but some patients have bleeding diathesis, thromboembolic complications, or both. In some cases, dysfibrinogenemia is associated with low circulating fibrinogen levels (hypodysfibrinogenemia).</description>
        <dbReference type="MIM" id="616004"/>
    </disease>
    <text>The disease is caused by variants affecting the gene represented in this entry.</text>
</comment>
<comment type="miscellaneous">
    <text>The gamma-chain carries the main binding site for the platelet receptor.</text>
</comment>
<comment type="miscellaneous">
    <molecule>Isoform Gamma-B</molecule>
    <text>Present in about 10% of the fibrinogen molecules in plasma but absent from those in the platelets.</text>
</comment>
<comment type="online information" name="Wikipedia">
    <link uri="https://en.wikipedia.org/wiki/Fibrinogen"/>
    <text>Fibrinogen entry</text>
</comment>
<evidence type="ECO:0000250" key="1">
    <source>
        <dbReference type="UniProtKB" id="E9PV24"/>
    </source>
</evidence>
<evidence type="ECO:0000255" key="2">
    <source>
        <dbReference type="PROSITE-ProRule" id="PRU00739"/>
    </source>
</evidence>
<evidence type="ECO:0000256" key="3">
    <source>
        <dbReference type="SAM" id="MobiDB-lite"/>
    </source>
</evidence>
<evidence type="ECO:0000269" key="4">
    <source>
    </source>
</evidence>
<evidence type="ECO:0000269" key="5">
    <source>
    </source>
</evidence>
<evidence type="ECO:0000269" key="6">
    <source>
    </source>
</evidence>
<evidence type="ECO:0000269" key="7">
    <source>
    </source>
</evidence>
<evidence type="ECO:0000269" key="8">
    <source>
    </source>
</evidence>
<evidence type="ECO:0000269" key="9">
    <source>
    </source>
</evidence>
<evidence type="ECO:0000269" key="10">
    <source>
    </source>
</evidence>
<evidence type="ECO:0000269" key="11">
    <source>
    </source>
</evidence>
<evidence type="ECO:0000269" key="12">
    <source>
    </source>
</evidence>
<evidence type="ECO:0000269" key="13">
    <source>
    </source>
</evidence>
<evidence type="ECO:0000269" key="14">
    <source>
    </source>
</evidence>
<evidence type="ECO:0000269" key="15">
    <source>
    </source>
</evidence>
<evidence type="ECO:0000269" key="16">
    <source>
    </source>
</evidence>
<evidence type="ECO:0000269" key="17">
    <source>
    </source>
</evidence>
<evidence type="ECO:0000269" key="18">
    <source>
    </source>
</evidence>
<evidence type="ECO:0000269" key="19">
    <source>
    </source>
</evidence>
<evidence type="ECO:0000269" key="20">
    <source>
    </source>
</evidence>
<evidence type="ECO:0000269" key="21">
    <source>
    </source>
</evidence>
<evidence type="ECO:0000269" key="22">
    <source>
    </source>
</evidence>
<evidence type="ECO:0000269" key="23">
    <source>
    </source>
</evidence>
<evidence type="ECO:0000269" key="24">
    <source>
    </source>
</evidence>
<evidence type="ECO:0000269" key="25">
    <source>
    </source>
</evidence>
<evidence type="ECO:0000269" key="26">
    <source>
    </source>
</evidence>
<evidence type="ECO:0000269" key="27">
    <source>
    </source>
</evidence>
<evidence type="ECO:0000269" key="28">
    <source>
    </source>
</evidence>
<evidence type="ECO:0000269" key="29">
    <source>
    </source>
</evidence>
<evidence type="ECO:0000269" key="30">
    <source>
    </source>
</evidence>
<evidence type="ECO:0000269" key="31">
    <source>
    </source>
</evidence>
<evidence type="ECO:0000269" key="32">
    <source>
    </source>
</evidence>
<evidence type="ECO:0000269" key="33">
    <source>
    </source>
</evidence>
<evidence type="ECO:0000269" key="34">
    <source>
    </source>
</evidence>
<evidence type="ECO:0000269" key="35">
    <source>
    </source>
</evidence>
<evidence type="ECO:0000269" key="36">
    <source>
    </source>
</evidence>
<evidence type="ECO:0000269" key="37">
    <source>
    </source>
</evidence>
<evidence type="ECO:0000269" key="38">
    <source>
    </source>
</evidence>
<evidence type="ECO:0000269" key="39">
    <source>
    </source>
</evidence>
<evidence type="ECO:0000269" key="40">
    <source>
    </source>
</evidence>
<evidence type="ECO:0000269" key="41">
    <source>
    </source>
</evidence>
<evidence type="ECO:0000269" key="42">
    <source>
    </source>
</evidence>
<evidence type="ECO:0000269" key="43">
    <source>
    </source>
</evidence>
<evidence type="ECO:0000269" key="44">
    <source>
    </source>
</evidence>
<evidence type="ECO:0000269" key="45">
    <source>
    </source>
</evidence>
<evidence type="ECO:0000269" key="46">
    <source>
    </source>
</evidence>
<evidence type="ECO:0000269" key="47">
    <source ref="6"/>
</evidence>
<evidence type="ECO:0000269" key="48">
    <source ref="9"/>
</evidence>
<evidence type="ECO:0000303" key="49">
    <source>
    </source>
</evidence>
<evidence type="ECO:0000303" key="50">
    <source>
    </source>
</evidence>
<evidence type="ECO:0000303" key="51">
    <source>
    </source>
</evidence>
<evidence type="ECO:0000303" key="52">
    <source ref="4"/>
</evidence>
<evidence type="ECO:0000303" key="53">
    <source ref="5"/>
</evidence>
<evidence type="ECO:0000305" key="54"/>
<evidence type="ECO:0000305" key="55">
    <source>
    </source>
</evidence>
<evidence type="ECO:0007744" key="56">
    <source>
        <dbReference type="PDB" id="1FID"/>
    </source>
</evidence>
<evidence type="ECO:0007744" key="57">
    <source>
        <dbReference type="PDB" id="3GHG"/>
    </source>
</evidence>
<evidence type="ECO:0007829" key="58">
    <source>
        <dbReference type="PDB" id="1FIB"/>
    </source>
</evidence>
<evidence type="ECO:0007829" key="59">
    <source>
        <dbReference type="PDB" id="1FID"/>
    </source>
</evidence>
<evidence type="ECO:0007829" key="60">
    <source>
        <dbReference type="PDB" id="1FZA"/>
    </source>
</evidence>
<evidence type="ECO:0007829" key="61">
    <source>
        <dbReference type="PDB" id="1FZB"/>
    </source>
</evidence>
<evidence type="ECO:0007829" key="62">
    <source>
        <dbReference type="PDB" id="1FZC"/>
    </source>
</evidence>
<evidence type="ECO:0007829" key="63">
    <source>
        <dbReference type="PDB" id="1RE3"/>
    </source>
</evidence>
<evidence type="ECO:0007829" key="64">
    <source>
        <dbReference type="PDB" id="2FIB"/>
    </source>
</evidence>
<evidence type="ECO:0007829" key="65">
    <source>
        <dbReference type="PDB" id="2H43"/>
    </source>
</evidence>
<evidence type="ECO:0007829" key="66">
    <source>
        <dbReference type="PDB" id="2HLO"/>
    </source>
</evidence>
<evidence type="ECO:0007829" key="67">
    <source>
        <dbReference type="PDB" id="2HOD"/>
    </source>
</evidence>
<evidence type="ECO:0007829" key="68">
    <source>
        <dbReference type="PDB" id="2OYI"/>
    </source>
</evidence>
<evidence type="ECO:0007829" key="69">
    <source>
        <dbReference type="PDB" id="3GHG"/>
    </source>
</evidence>
<evidence type="ECO:0007829" key="70">
    <source>
        <dbReference type="PDB" id="3HUS"/>
    </source>
</evidence>
<evidence type="ECO:0007829" key="71">
    <source>
        <dbReference type="PDB" id="4B60"/>
    </source>
</evidence>